<organism>
    <name type="scientific">Homo sapiens</name>
    <name type="common">Human</name>
    <dbReference type="NCBI Taxonomy" id="9606"/>
    <lineage>
        <taxon>Eukaryota</taxon>
        <taxon>Metazoa</taxon>
        <taxon>Chordata</taxon>
        <taxon>Craniata</taxon>
        <taxon>Vertebrata</taxon>
        <taxon>Euteleostomi</taxon>
        <taxon>Mammalia</taxon>
        <taxon>Eutheria</taxon>
        <taxon>Euarchontoglires</taxon>
        <taxon>Primates</taxon>
        <taxon>Haplorrhini</taxon>
        <taxon>Catarrhini</taxon>
        <taxon>Hominidae</taxon>
        <taxon>Homo</taxon>
    </lineage>
</organism>
<dbReference type="EC" id="2.7.11.1"/>
<dbReference type="EMBL" id="X76104">
    <property type="protein sequence ID" value="CAA53712.1"/>
    <property type="status" value="ALT_FRAME"/>
    <property type="molecule type" value="mRNA"/>
</dbReference>
<dbReference type="EMBL" id="AK127855">
    <property type="protein sequence ID" value="BAC87163.1"/>
    <property type="molecule type" value="mRNA"/>
</dbReference>
<dbReference type="EMBL" id="CR749834">
    <property type="protein sequence ID" value="CAH18690.1"/>
    <property type="molecule type" value="mRNA"/>
</dbReference>
<dbReference type="EMBL" id="DQ436495">
    <property type="protein sequence ID" value="ABD96827.1"/>
    <property type="molecule type" value="Genomic_DNA"/>
</dbReference>
<dbReference type="EMBL" id="AL160279">
    <property type="status" value="NOT_ANNOTATED_CDS"/>
    <property type="molecule type" value="Genomic_DNA"/>
</dbReference>
<dbReference type="EMBL" id="AL161787">
    <property type="status" value="NOT_ANNOTATED_CDS"/>
    <property type="molecule type" value="Genomic_DNA"/>
</dbReference>
<dbReference type="EMBL" id="AL591852">
    <property type="status" value="NOT_ANNOTATED_CDS"/>
    <property type="molecule type" value="Genomic_DNA"/>
</dbReference>
<dbReference type="EMBL" id="CH471089">
    <property type="protein sequence ID" value="EAW62727.1"/>
    <property type="molecule type" value="Genomic_DNA"/>
</dbReference>
<dbReference type="EMBL" id="BC113660">
    <property type="protein sequence ID" value="AAI13661.1"/>
    <property type="molecule type" value="mRNA"/>
</dbReference>
<dbReference type="EMBL" id="BC143733">
    <property type="protein sequence ID" value="AAI43734.1"/>
    <property type="molecule type" value="mRNA"/>
</dbReference>
<dbReference type="EMBL" id="BC143759">
    <property type="protein sequence ID" value="AAI43760.1"/>
    <property type="molecule type" value="mRNA"/>
</dbReference>
<dbReference type="EMBL" id="BT006935">
    <property type="protein sequence ID" value="AAP35581.1"/>
    <property type="status" value="ALT_SEQ"/>
    <property type="molecule type" value="mRNA"/>
</dbReference>
<dbReference type="CCDS" id="CCDS43842.1">
    <molecule id="P53355-1"/>
</dbReference>
<dbReference type="PIR" id="I37275">
    <property type="entry name" value="I37275"/>
</dbReference>
<dbReference type="RefSeq" id="NP_001275658.1">
    <molecule id="P53355-1"/>
    <property type="nucleotide sequence ID" value="NM_001288729.2"/>
</dbReference>
<dbReference type="RefSeq" id="NP_001275659.1">
    <molecule id="P53355-1"/>
    <property type="nucleotide sequence ID" value="NM_001288730.2"/>
</dbReference>
<dbReference type="RefSeq" id="NP_001275660.1">
    <molecule id="P53355-1"/>
    <property type="nucleotide sequence ID" value="NM_001288731.2"/>
</dbReference>
<dbReference type="RefSeq" id="NP_004929.2">
    <molecule id="P53355-1"/>
    <property type="nucleotide sequence ID" value="NM_004938.4"/>
</dbReference>
<dbReference type="RefSeq" id="XP_047278842.1">
    <molecule id="P53355-1"/>
    <property type="nucleotide sequence ID" value="XM_047422886.1"/>
</dbReference>
<dbReference type="RefSeq" id="XP_047278843.1">
    <molecule id="P53355-1"/>
    <property type="nucleotide sequence ID" value="XM_047422887.1"/>
</dbReference>
<dbReference type="PDB" id="1IG1">
    <property type="method" value="X-ray"/>
    <property type="resolution" value="1.80 A"/>
    <property type="chains" value="A=2-285"/>
</dbReference>
<dbReference type="PDB" id="1JKK">
    <property type="method" value="X-ray"/>
    <property type="resolution" value="2.40 A"/>
    <property type="chains" value="A=2-285"/>
</dbReference>
<dbReference type="PDB" id="1JKL">
    <property type="method" value="X-ray"/>
    <property type="resolution" value="1.62 A"/>
    <property type="chains" value="A=2-285"/>
</dbReference>
<dbReference type="PDB" id="1JKS">
    <property type="method" value="X-ray"/>
    <property type="resolution" value="1.50 A"/>
    <property type="chains" value="A=2-285"/>
</dbReference>
<dbReference type="PDB" id="1JKT">
    <property type="method" value="X-ray"/>
    <property type="resolution" value="3.50 A"/>
    <property type="chains" value="A/B=2-285"/>
</dbReference>
<dbReference type="PDB" id="1P4F">
    <property type="method" value="X-ray"/>
    <property type="resolution" value="1.90 A"/>
    <property type="chains" value="A=2-285"/>
</dbReference>
<dbReference type="PDB" id="1WVW">
    <property type="method" value="X-ray"/>
    <property type="resolution" value="2.40 A"/>
    <property type="chains" value="A=1-278"/>
</dbReference>
<dbReference type="PDB" id="1WVX">
    <property type="method" value="X-ray"/>
    <property type="resolution" value="2.60 A"/>
    <property type="chains" value="A=1-278"/>
</dbReference>
<dbReference type="PDB" id="1WVY">
    <property type="method" value="X-ray"/>
    <property type="resolution" value="2.80 A"/>
    <property type="chains" value="A=1-278"/>
</dbReference>
<dbReference type="PDB" id="1YR5">
    <property type="method" value="X-ray"/>
    <property type="resolution" value="1.70 A"/>
    <property type="chains" value="B=302-320"/>
</dbReference>
<dbReference type="PDB" id="2W4J">
    <property type="method" value="X-ray"/>
    <property type="resolution" value="1.30 A"/>
    <property type="chains" value="A=1-277"/>
</dbReference>
<dbReference type="PDB" id="2W4K">
    <property type="method" value="X-ray"/>
    <property type="resolution" value="1.90 A"/>
    <property type="chains" value="A=1-302"/>
</dbReference>
<dbReference type="PDB" id="2X0G">
    <property type="method" value="X-ray"/>
    <property type="resolution" value="2.20 A"/>
    <property type="chains" value="A=1-334"/>
</dbReference>
<dbReference type="PDB" id="2XUU">
    <property type="method" value="X-ray"/>
    <property type="resolution" value="1.80 A"/>
    <property type="chains" value="A=1-334"/>
</dbReference>
<dbReference type="PDB" id="2XZS">
    <property type="method" value="X-ray"/>
    <property type="resolution" value="2.00 A"/>
    <property type="chains" value="A/B=2-312"/>
</dbReference>
<dbReference type="PDB" id="2Y0A">
    <property type="method" value="X-ray"/>
    <property type="resolution" value="2.60 A"/>
    <property type="chains" value="A=2-304"/>
</dbReference>
<dbReference type="PDB" id="2Y4P">
    <property type="method" value="X-ray"/>
    <property type="resolution" value="2.65 A"/>
    <property type="chains" value="A/B/C/D=1-285"/>
</dbReference>
<dbReference type="PDB" id="2Y4V">
    <property type="method" value="X-ray"/>
    <property type="resolution" value="1.80 A"/>
    <property type="chains" value="B=302-320"/>
</dbReference>
<dbReference type="PDB" id="2YAK">
    <property type="method" value="X-ray"/>
    <property type="resolution" value="2.20 A"/>
    <property type="chains" value="A=1-285"/>
</dbReference>
<dbReference type="PDB" id="3DFC">
    <property type="method" value="X-ray"/>
    <property type="resolution" value="1.90 A"/>
    <property type="chains" value="B=1-285"/>
</dbReference>
<dbReference type="PDB" id="3DGK">
    <property type="method" value="X-ray"/>
    <property type="resolution" value="1.70 A"/>
    <property type="chains" value="A=1-285"/>
</dbReference>
<dbReference type="PDB" id="3EH9">
    <property type="method" value="X-ray"/>
    <property type="resolution" value="1.70 A"/>
    <property type="chains" value="A=2-285"/>
</dbReference>
<dbReference type="PDB" id="3EHA">
    <property type="method" value="X-ray"/>
    <property type="resolution" value="1.60 A"/>
    <property type="chains" value="A=2-285"/>
</dbReference>
<dbReference type="PDB" id="3F5G">
    <property type="method" value="X-ray"/>
    <property type="resolution" value="1.85 A"/>
    <property type="chains" value="A=2-285"/>
</dbReference>
<dbReference type="PDB" id="3F5U">
    <property type="method" value="X-ray"/>
    <property type="resolution" value="2.00 A"/>
    <property type="chains" value="A=1-285"/>
</dbReference>
<dbReference type="PDB" id="3GU4">
    <property type="method" value="X-ray"/>
    <property type="resolution" value="1.35 A"/>
    <property type="chains" value="A=1-285"/>
</dbReference>
<dbReference type="PDB" id="3GU5">
    <property type="method" value="X-ray"/>
    <property type="resolution" value="1.65 A"/>
    <property type="chains" value="A=1-285"/>
</dbReference>
<dbReference type="PDB" id="3GU6">
    <property type="method" value="X-ray"/>
    <property type="resolution" value="1.49 A"/>
    <property type="chains" value="A=1-285"/>
</dbReference>
<dbReference type="PDB" id="3GU7">
    <property type="method" value="X-ray"/>
    <property type="resolution" value="1.90 A"/>
    <property type="chains" value="A=1-285"/>
</dbReference>
<dbReference type="PDB" id="3GU8">
    <property type="method" value="X-ray"/>
    <property type="resolution" value="1.60 A"/>
    <property type="chains" value="A=1-285"/>
</dbReference>
<dbReference type="PDB" id="3GUB">
    <property type="method" value="X-ray"/>
    <property type="resolution" value="1.71 A"/>
    <property type="chains" value="A=1-285"/>
</dbReference>
<dbReference type="PDB" id="3ZXT">
    <property type="method" value="X-ray"/>
    <property type="resolution" value="2.65 A"/>
    <property type="chains" value="A/B/C/D=1-285"/>
</dbReference>
<dbReference type="PDB" id="4B4L">
    <property type="method" value="X-ray"/>
    <property type="resolution" value="1.75 A"/>
    <property type="chains" value="A=1-334"/>
</dbReference>
<dbReference type="PDB" id="4PF4">
    <property type="method" value="X-ray"/>
    <property type="resolution" value="1.13 A"/>
    <property type="chains" value="A=1-277"/>
</dbReference>
<dbReference type="PDB" id="4TL0">
    <property type="method" value="X-ray"/>
    <property type="resolution" value="2.70 A"/>
    <property type="chains" value="A=1-334"/>
</dbReference>
<dbReference type="PDB" id="4TXC">
    <property type="method" value="X-ray"/>
    <property type="resolution" value="1.95 A"/>
    <property type="chains" value="A=1-285"/>
</dbReference>
<dbReference type="PDB" id="4UV0">
    <property type="method" value="X-ray"/>
    <property type="resolution" value="2.49 A"/>
    <property type="chains" value="A=1-321"/>
</dbReference>
<dbReference type="PDB" id="4YO4">
    <property type="method" value="X-ray"/>
    <property type="resolution" value="1.60 A"/>
    <property type="chains" value="A=2-285"/>
</dbReference>
<dbReference type="PDB" id="4YPD">
    <property type="method" value="X-ray"/>
    <property type="resolution" value="1.40 A"/>
    <property type="chains" value="A=2-285"/>
</dbReference>
<dbReference type="PDB" id="5AUT">
    <property type="method" value="X-ray"/>
    <property type="resolution" value="1.70 A"/>
    <property type="chains" value="A=1-285"/>
</dbReference>
<dbReference type="PDB" id="5AUU">
    <property type="method" value="X-ray"/>
    <property type="resolution" value="1.70 A"/>
    <property type="chains" value="A=1-285"/>
</dbReference>
<dbReference type="PDB" id="5AUV">
    <property type="method" value="X-ray"/>
    <property type="resolution" value="1.50 A"/>
    <property type="chains" value="A=1-285"/>
</dbReference>
<dbReference type="PDB" id="5AUW">
    <property type="method" value="X-ray"/>
    <property type="resolution" value="1.50 A"/>
    <property type="chains" value="A=1-285"/>
</dbReference>
<dbReference type="PDB" id="5AUX">
    <property type="method" value="X-ray"/>
    <property type="resolution" value="1.50 A"/>
    <property type="chains" value="A=1-285"/>
</dbReference>
<dbReference type="PDB" id="5AUY">
    <property type="method" value="X-ray"/>
    <property type="resolution" value="2.00 A"/>
    <property type="chains" value="A=1-285"/>
</dbReference>
<dbReference type="PDB" id="5AUZ">
    <property type="method" value="X-ray"/>
    <property type="resolution" value="1.60 A"/>
    <property type="chains" value="A=1-285"/>
</dbReference>
<dbReference type="PDB" id="5AV0">
    <property type="method" value="X-ray"/>
    <property type="resolution" value="1.85 A"/>
    <property type="chains" value="A=1-285"/>
</dbReference>
<dbReference type="PDB" id="5AV1">
    <property type="method" value="X-ray"/>
    <property type="resolution" value="1.50 A"/>
    <property type="chains" value="A=1-285"/>
</dbReference>
<dbReference type="PDB" id="5AV2">
    <property type="method" value="X-ray"/>
    <property type="resolution" value="1.50 A"/>
    <property type="chains" value="A=1-285"/>
</dbReference>
<dbReference type="PDB" id="5AV3">
    <property type="method" value="X-ray"/>
    <property type="resolution" value="1.90 A"/>
    <property type="chains" value="A=1-285"/>
</dbReference>
<dbReference type="PDB" id="5AV4">
    <property type="method" value="X-ray"/>
    <property type="resolution" value="1.40 A"/>
    <property type="chains" value="A=1-285"/>
</dbReference>
<dbReference type="PDB" id="6AAR">
    <property type="method" value="X-ray"/>
    <property type="resolution" value="1.95 A"/>
    <property type="chains" value="A=1-285"/>
</dbReference>
<dbReference type="PDB" id="6FHA">
    <property type="method" value="X-ray"/>
    <property type="resolution" value="2.30 A"/>
    <property type="chains" value="A=2-334"/>
</dbReference>
<dbReference type="PDB" id="6FHB">
    <property type="method" value="X-ray"/>
    <property type="resolution" value="1.75 A"/>
    <property type="chains" value="A=2-334"/>
</dbReference>
<dbReference type="PDB" id="6GY5">
    <property type="method" value="X-ray"/>
    <property type="resolution" value="1.09 A"/>
    <property type="chains" value="U=1334-1344"/>
</dbReference>
<dbReference type="PDB" id="6IN4">
    <property type="method" value="X-ray"/>
    <property type="resolution" value="1.80 A"/>
    <property type="chains" value="A=1-285"/>
</dbReference>
<dbReference type="PDB" id="6QMO">
    <property type="method" value="X-ray"/>
    <property type="resolution" value="1.87 A"/>
    <property type="chains" value="A=2-310"/>
</dbReference>
<dbReference type="PDB" id="6QN4">
    <property type="method" value="X-ray"/>
    <property type="resolution" value="2.50 A"/>
    <property type="chains" value="A=2-310"/>
</dbReference>
<dbReference type="PDB" id="7CCU">
    <property type="method" value="X-ray"/>
    <property type="resolution" value="1.65 A"/>
    <property type="chains" value="A=1-285"/>
</dbReference>
<dbReference type="PDB" id="7CCV">
    <property type="method" value="X-ray"/>
    <property type="resolution" value="1.75 A"/>
    <property type="chains" value="A=1-285"/>
</dbReference>
<dbReference type="PDB" id="7CCW">
    <property type="method" value="X-ray"/>
    <property type="resolution" value="1.40 A"/>
    <property type="chains" value="A=1-285"/>
</dbReference>
<dbReference type="PDB" id="8IE5">
    <property type="method" value="X-ray"/>
    <property type="resolution" value="1.80 A"/>
    <property type="chains" value="A=1-285"/>
</dbReference>
<dbReference type="PDB" id="8IE6">
    <property type="method" value="X-ray"/>
    <property type="resolution" value="1.70 A"/>
    <property type="chains" value="A=1-285"/>
</dbReference>
<dbReference type="PDB" id="8IE7">
    <property type="method" value="X-ray"/>
    <property type="resolution" value="1.85 A"/>
    <property type="chains" value="A=1-285"/>
</dbReference>
<dbReference type="PDB" id="8IE8">
    <property type="method" value="X-ray"/>
    <property type="resolution" value="1.75 A"/>
    <property type="chains" value="A=1-285"/>
</dbReference>
<dbReference type="PDB" id="8ODZ">
    <property type="method" value="EM"/>
    <property type="resolution" value="3.60 A"/>
    <property type="chains" value="C=301-319"/>
</dbReference>
<dbReference type="PDB" id="8OE0">
    <property type="method" value="EM"/>
    <property type="resolution" value="4.60 A"/>
    <property type="chains" value="C=300-319"/>
</dbReference>
<dbReference type="PDB" id="8OE4">
    <property type="method" value="EM"/>
    <property type="resolution" value="3.60 A"/>
    <property type="chains" value="D=301-319"/>
</dbReference>
<dbReference type="PDB" id="8PB1">
    <property type="method" value="EM"/>
    <property type="resolution" value="3.50 A"/>
    <property type="chains" value="C=300-319"/>
</dbReference>
<dbReference type="PDB" id="9DUB">
    <property type="method" value="X-ray"/>
    <property type="resolution" value="1.50 A"/>
    <property type="chains" value="A=2-285"/>
</dbReference>
<dbReference type="PDB" id="9DUE">
    <property type="method" value="X-ray"/>
    <property type="resolution" value="1.65 A"/>
    <property type="chains" value="A=2-285"/>
</dbReference>
<dbReference type="PDB" id="9INV">
    <property type="method" value="X-ray"/>
    <property type="resolution" value="1.61 A"/>
    <property type="chains" value="A=1-285"/>
</dbReference>
<dbReference type="PDB" id="9INW">
    <property type="method" value="X-ray"/>
    <property type="resolution" value="1.52 A"/>
    <property type="chains" value="A=1-285"/>
</dbReference>
<dbReference type="PDB" id="9INX">
    <property type="method" value="X-ray"/>
    <property type="resolution" value="1.72 A"/>
    <property type="chains" value="A=1-285"/>
</dbReference>
<dbReference type="PDB" id="9MIU">
    <property type="method" value="X-ray"/>
    <property type="resolution" value="1.90 A"/>
    <property type="chains" value="A=2-285"/>
</dbReference>
<dbReference type="PDBsum" id="1IG1"/>
<dbReference type="PDBsum" id="1JKK"/>
<dbReference type="PDBsum" id="1JKL"/>
<dbReference type="PDBsum" id="1JKS"/>
<dbReference type="PDBsum" id="1JKT"/>
<dbReference type="PDBsum" id="1P4F"/>
<dbReference type="PDBsum" id="1WVW"/>
<dbReference type="PDBsum" id="1WVX"/>
<dbReference type="PDBsum" id="1WVY"/>
<dbReference type="PDBsum" id="1YR5"/>
<dbReference type="PDBsum" id="2W4J"/>
<dbReference type="PDBsum" id="2W4K"/>
<dbReference type="PDBsum" id="2X0G"/>
<dbReference type="PDBsum" id="2XUU"/>
<dbReference type="PDBsum" id="2XZS"/>
<dbReference type="PDBsum" id="2Y0A"/>
<dbReference type="PDBsum" id="2Y4P"/>
<dbReference type="PDBsum" id="2Y4V"/>
<dbReference type="PDBsum" id="2YAK"/>
<dbReference type="PDBsum" id="3DFC"/>
<dbReference type="PDBsum" id="3DGK"/>
<dbReference type="PDBsum" id="3EH9"/>
<dbReference type="PDBsum" id="3EHA"/>
<dbReference type="PDBsum" id="3F5G"/>
<dbReference type="PDBsum" id="3F5U"/>
<dbReference type="PDBsum" id="3GU4"/>
<dbReference type="PDBsum" id="3GU5"/>
<dbReference type="PDBsum" id="3GU6"/>
<dbReference type="PDBsum" id="3GU7"/>
<dbReference type="PDBsum" id="3GU8"/>
<dbReference type="PDBsum" id="3GUB"/>
<dbReference type="PDBsum" id="3ZXT"/>
<dbReference type="PDBsum" id="4B4L"/>
<dbReference type="PDBsum" id="4PF4"/>
<dbReference type="PDBsum" id="4TL0"/>
<dbReference type="PDBsum" id="4TXC"/>
<dbReference type="PDBsum" id="4UV0"/>
<dbReference type="PDBsum" id="4YO4"/>
<dbReference type="PDBsum" id="4YPD"/>
<dbReference type="PDBsum" id="5AUT"/>
<dbReference type="PDBsum" id="5AUU"/>
<dbReference type="PDBsum" id="5AUV"/>
<dbReference type="PDBsum" id="5AUW"/>
<dbReference type="PDBsum" id="5AUX"/>
<dbReference type="PDBsum" id="5AUY"/>
<dbReference type="PDBsum" id="5AUZ"/>
<dbReference type="PDBsum" id="5AV0"/>
<dbReference type="PDBsum" id="5AV1"/>
<dbReference type="PDBsum" id="5AV2"/>
<dbReference type="PDBsum" id="5AV3"/>
<dbReference type="PDBsum" id="5AV4"/>
<dbReference type="PDBsum" id="6AAR"/>
<dbReference type="PDBsum" id="6FHA"/>
<dbReference type="PDBsum" id="6FHB"/>
<dbReference type="PDBsum" id="6GY5"/>
<dbReference type="PDBsum" id="6IN4"/>
<dbReference type="PDBsum" id="6QMO"/>
<dbReference type="PDBsum" id="6QN4"/>
<dbReference type="PDBsum" id="7CCU"/>
<dbReference type="PDBsum" id="7CCV"/>
<dbReference type="PDBsum" id="7CCW"/>
<dbReference type="PDBsum" id="8IE5"/>
<dbReference type="PDBsum" id="8IE6"/>
<dbReference type="PDBsum" id="8IE7"/>
<dbReference type="PDBsum" id="8IE8"/>
<dbReference type="PDBsum" id="8ODZ"/>
<dbReference type="PDBsum" id="8OE0"/>
<dbReference type="PDBsum" id="8OE4"/>
<dbReference type="PDBsum" id="8PB1"/>
<dbReference type="PDBsum" id="9DUB"/>
<dbReference type="PDBsum" id="9DUE"/>
<dbReference type="PDBsum" id="9INV"/>
<dbReference type="PDBsum" id="9INW"/>
<dbReference type="PDBsum" id="9INX"/>
<dbReference type="PDBsum" id="9MIU"/>
<dbReference type="EMDB" id="EMD-16820"/>
<dbReference type="EMDB" id="EMD-16821"/>
<dbReference type="EMDB" id="EMD-16824"/>
<dbReference type="EMDB" id="EMD-17580"/>
<dbReference type="SMR" id="P53355"/>
<dbReference type="BioGRID" id="107982">
    <property type="interactions" value="201"/>
</dbReference>
<dbReference type="ComplexPortal" id="CPX-102">
    <property type="entry name" value="DAPK1 - calmodulin complex"/>
</dbReference>
<dbReference type="FunCoup" id="P53355">
    <property type="interactions" value="1013"/>
</dbReference>
<dbReference type="IntAct" id="P53355">
    <property type="interactions" value="172"/>
</dbReference>
<dbReference type="MINT" id="P53355"/>
<dbReference type="STRING" id="9606.ENSP00000386135"/>
<dbReference type="BindingDB" id="P53355"/>
<dbReference type="ChEMBL" id="CHEMBL2558"/>
<dbReference type="DrugBank" id="DB04069">
    <property type="generic name" value="5,6-Dihydro-Benzo[H]Cinnolin-3-Ylamine"/>
</dbReference>
<dbReference type="DrugBank" id="DB07444">
    <property type="generic name" value="6-(3-AMINOPROPYL)-4,9-DIMETHYLPYRROLO[3,4-C]CARBAZOLE-1,3(2H,6H)-DIONE"/>
</dbReference>
<dbReference type="DrugBank" id="DB12010">
    <property type="generic name" value="Fostamatinib"/>
</dbReference>
<dbReference type="DrugBank" id="DB04395">
    <property type="generic name" value="Phosphoaminophosphonic Acid-Adenylate Ester"/>
</dbReference>
<dbReference type="DrugCentral" id="P53355"/>
<dbReference type="GuidetoPHARMACOLOGY" id="2002"/>
<dbReference type="TCDB" id="8.A.104.1.15">
    <property type="family name" value="the 5'-amp-activated protein kinase (ampk) family"/>
</dbReference>
<dbReference type="iPTMnet" id="P53355"/>
<dbReference type="PhosphoSitePlus" id="P53355"/>
<dbReference type="BioMuta" id="DAPK1"/>
<dbReference type="DMDM" id="317373595"/>
<dbReference type="CPTAC" id="CPTAC-2910"/>
<dbReference type="jPOST" id="P53355"/>
<dbReference type="MassIVE" id="P53355"/>
<dbReference type="PaxDb" id="9606-ENSP00000386135"/>
<dbReference type="PeptideAtlas" id="P53355"/>
<dbReference type="ProteomicsDB" id="56570">
    <molecule id="P53355-1"/>
</dbReference>
<dbReference type="ProteomicsDB" id="56571">
    <molecule id="P53355-2"/>
</dbReference>
<dbReference type="ProteomicsDB" id="56572">
    <molecule id="P53355-3"/>
</dbReference>
<dbReference type="ProteomicsDB" id="7221"/>
<dbReference type="Pumba" id="P53355"/>
<dbReference type="Antibodypedia" id="6771">
    <property type="antibodies" value="415 antibodies from 38 providers"/>
</dbReference>
<dbReference type="DNASU" id="1612"/>
<dbReference type="Ensembl" id="ENST00000358077.9">
    <molecule id="P53355-1"/>
    <property type="protein sequence ID" value="ENSP00000350785.5"/>
    <property type="gene ID" value="ENSG00000196730.13"/>
</dbReference>
<dbReference type="Ensembl" id="ENST00000408954.8">
    <molecule id="P53355-1"/>
    <property type="protein sequence ID" value="ENSP00000386135.3"/>
    <property type="gene ID" value="ENSG00000196730.13"/>
</dbReference>
<dbReference type="Ensembl" id="ENST00000469640.6">
    <molecule id="P53355-4"/>
    <property type="protein sequence ID" value="ENSP00000418885.3"/>
    <property type="gene ID" value="ENSG00000196730.13"/>
</dbReference>
<dbReference type="Ensembl" id="ENST00000472284.5">
    <molecule id="P53355-1"/>
    <property type="protein sequence ID" value="ENSP00000417076.1"/>
    <property type="gene ID" value="ENSG00000196730.13"/>
</dbReference>
<dbReference type="Ensembl" id="ENST00000491893.5">
    <molecule id="P53355-4"/>
    <property type="protein sequence ID" value="ENSP00000419026.1"/>
    <property type="gene ID" value="ENSG00000196730.13"/>
</dbReference>
<dbReference type="Ensembl" id="ENST00000622514.4">
    <molecule id="P53355-1"/>
    <property type="protein sequence ID" value="ENSP00000484267.1"/>
    <property type="gene ID" value="ENSG00000196730.13"/>
</dbReference>
<dbReference type="GeneID" id="1612"/>
<dbReference type="KEGG" id="hsa:1612"/>
<dbReference type="MANE-Select" id="ENST00000408954.8">
    <property type="protein sequence ID" value="ENSP00000386135.3"/>
    <property type="RefSeq nucleotide sequence ID" value="NM_004938.4"/>
    <property type="RefSeq protein sequence ID" value="NP_004929.2"/>
</dbReference>
<dbReference type="UCSC" id="uc004apc.5">
    <molecule id="P53355-1"/>
    <property type="organism name" value="human"/>
</dbReference>
<dbReference type="AGR" id="HGNC:2674"/>
<dbReference type="CTD" id="1612"/>
<dbReference type="DisGeNET" id="1612"/>
<dbReference type="GeneCards" id="DAPK1"/>
<dbReference type="HGNC" id="HGNC:2674">
    <property type="gene designation" value="DAPK1"/>
</dbReference>
<dbReference type="HPA" id="ENSG00000196730">
    <property type="expression patterns" value="Low tissue specificity"/>
</dbReference>
<dbReference type="MalaCards" id="DAPK1"/>
<dbReference type="MIM" id="600831">
    <property type="type" value="gene"/>
</dbReference>
<dbReference type="neXtProt" id="NX_P53355"/>
<dbReference type="OpenTargets" id="ENSG00000196730"/>
<dbReference type="PharmGKB" id="PA27142"/>
<dbReference type="VEuPathDB" id="HostDB:ENSG00000196730"/>
<dbReference type="eggNOG" id="KOG0032">
    <property type="taxonomic scope" value="Eukaryota"/>
</dbReference>
<dbReference type="GeneTree" id="ENSGT00940000153424"/>
<dbReference type="HOGENOM" id="CLU_002849_2_0_1"/>
<dbReference type="InParanoid" id="P53355"/>
<dbReference type="OrthoDB" id="9306077at2759"/>
<dbReference type="PAN-GO" id="P53355">
    <property type="GO annotations" value="5 GO annotations based on evolutionary models"/>
</dbReference>
<dbReference type="PhylomeDB" id="P53355"/>
<dbReference type="TreeFam" id="TF314166"/>
<dbReference type="BRENDA" id="2.7.11.1">
    <property type="organism ID" value="2681"/>
</dbReference>
<dbReference type="PathwayCommons" id="P53355"/>
<dbReference type="Reactome" id="R-HSA-418889">
    <property type="pathway name" value="Caspase activation via Dependence Receptors in the absence of ligand"/>
</dbReference>
<dbReference type="SignaLink" id="P53355"/>
<dbReference type="SIGNOR" id="P53355"/>
<dbReference type="BioGRID-ORCS" id="1612">
    <property type="hits" value="15 hits in 1193 CRISPR screens"/>
</dbReference>
<dbReference type="ChiTaRS" id="DAPK1">
    <property type="organism name" value="human"/>
</dbReference>
<dbReference type="EvolutionaryTrace" id="P53355"/>
<dbReference type="GeneWiki" id="DAPK1"/>
<dbReference type="GenomeRNAi" id="1612"/>
<dbReference type="Pharos" id="P53355">
    <property type="development level" value="Tchem"/>
</dbReference>
<dbReference type="PRO" id="PR:P53355"/>
<dbReference type="Proteomes" id="UP000005640">
    <property type="component" value="Chromosome 9"/>
</dbReference>
<dbReference type="RNAct" id="P53355">
    <property type="molecule type" value="protein"/>
</dbReference>
<dbReference type="Bgee" id="ENSG00000196730">
    <property type="expression patterns" value="Expressed in germinal epithelium of ovary and 194 other cell types or tissues"/>
</dbReference>
<dbReference type="ExpressionAtlas" id="P53355">
    <property type="expression patterns" value="baseline and differential"/>
</dbReference>
<dbReference type="GO" id="GO:0015629">
    <property type="term" value="C:actin cytoskeleton"/>
    <property type="evidence" value="ECO:0000314"/>
    <property type="project" value="UniProtKB"/>
</dbReference>
<dbReference type="GO" id="GO:0005737">
    <property type="term" value="C:cytoplasm"/>
    <property type="evidence" value="ECO:0000314"/>
    <property type="project" value="UniProtKB"/>
</dbReference>
<dbReference type="GO" id="GO:1990722">
    <property type="term" value="C:DAPK1-calmodulin complex"/>
    <property type="evidence" value="ECO:0000353"/>
    <property type="project" value="ComplexPortal"/>
</dbReference>
<dbReference type="GO" id="GO:0098978">
    <property type="term" value="C:glutamatergic synapse"/>
    <property type="evidence" value="ECO:0007669"/>
    <property type="project" value="Ensembl"/>
</dbReference>
<dbReference type="GO" id="GO:0005634">
    <property type="term" value="C:nucleus"/>
    <property type="evidence" value="ECO:0000318"/>
    <property type="project" value="GO_Central"/>
</dbReference>
<dbReference type="GO" id="GO:0005886">
    <property type="term" value="C:plasma membrane"/>
    <property type="evidence" value="ECO:0000314"/>
    <property type="project" value="UniProtKB"/>
</dbReference>
<dbReference type="GO" id="GO:0014069">
    <property type="term" value="C:postsynaptic density"/>
    <property type="evidence" value="ECO:0007669"/>
    <property type="project" value="Ensembl"/>
</dbReference>
<dbReference type="GO" id="GO:0005524">
    <property type="term" value="F:ATP binding"/>
    <property type="evidence" value="ECO:0000314"/>
    <property type="project" value="UniProtKB"/>
</dbReference>
<dbReference type="GO" id="GO:0004683">
    <property type="term" value="F:calcium/calmodulin-dependent protein kinase activity"/>
    <property type="evidence" value="ECO:0000314"/>
    <property type="project" value="UniProtKB"/>
</dbReference>
<dbReference type="GO" id="GO:0005516">
    <property type="term" value="F:calmodulin binding"/>
    <property type="evidence" value="ECO:0000314"/>
    <property type="project" value="UniProtKB"/>
</dbReference>
<dbReference type="GO" id="GO:0005525">
    <property type="term" value="F:GTP binding"/>
    <property type="evidence" value="ECO:0007669"/>
    <property type="project" value="UniProtKB-KW"/>
</dbReference>
<dbReference type="GO" id="GO:0042802">
    <property type="term" value="F:identical protein binding"/>
    <property type="evidence" value="ECO:0000353"/>
    <property type="project" value="IntAct"/>
</dbReference>
<dbReference type="GO" id="GO:0004672">
    <property type="term" value="F:protein kinase activity"/>
    <property type="evidence" value="ECO:0000314"/>
    <property type="project" value="UniProtKB"/>
</dbReference>
<dbReference type="GO" id="GO:0106310">
    <property type="term" value="F:protein serine kinase activity"/>
    <property type="evidence" value="ECO:0007669"/>
    <property type="project" value="RHEA"/>
</dbReference>
<dbReference type="GO" id="GO:0004674">
    <property type="term" value="F:protein serine/threonine kinase activity"/>
    <property type="evidence" value="ECO:0000318"/>
    <property type="project" value="GO_Central"/>
</dbReference>
<dbReference type="GO" id="GO:0017075">
    <property type="term" value="F:syntaxin-1 binding"/>
    <property type="evidence" value="ECO:0000353"/>
    <property type="project" value="UniProtKB"/>
</dbReference>
<dbReference type="GO" id="GO:0006915">
    <property type="term" value="P:apoptotic process"/>
    <property type="evidence" value="ECO:0000315"/>
    <property type="project" value="UniProtKB"/>
</dbReference>
<dbReference type="GO" id="GO:0097190">
    <property type="term" value="P:apoptotic signaling pathway"/>
    <property type="evidence" value="ECO:0000315"/>
    <property type="project" value="UniProtKB"/>
</dbReference>
<dbReference type="GO" id="GO:0071447">
    <property type="term" value="P:cellular response to hydroperoxide"/>
    <property type="evidence" value="ECO:0000315"/>
    <property type="project" value="ParkinsonsUK-UCL"/>
</dbReference>
<dbReference type="GO" id="GO:0071346">
    <property type="term" value="P:cellular response to type II interferon"/>
    <property type="evidence" value="ECO:0000314"/>
    <property type="project" value="UniProtKB"/>
</dbReference>
<dbReference type="GO" id="GO:0002357">
    <property type="term" value="P:defense response to tumor cell"/>
    <property type="evidence" value="ECO:0000315"/>
    <property type="project" value="ARUK-UCL"/>
</dbReference>
<dbReference type="GO" id="GO:0008625">
    <property type="term" value="P:extrinsic apoptotic signaling pathway via death domain receptors"/>
    <property type="evidence" value="ECO:0007669"/>
    <property type="project" value="Ensembl"/>
</dbReference>
<dbReference type="GO" id="GO:0035556">
    <property type="term" value="P:intracellular signal transduction"/>
    <property type="evidence" value="ECO:0000314"/>
    <property type="project" value="UniProtKB"/>
</dbReference>
<dbReference type="GO" id="GO:0043066">
    <property type="term" value="P:negative regulation of apoptotic process"/>
    <property type="evidence" value="ECO:0007669"/>
    <property type="project" value="Ensembl"/>
</dbReference>
<dbReference type="GO" id="GO:0017148">
    <property type="term" value="P:negative regulation of translation"/>
    <property type="evidence" value="ECO:0000314"/>
    <property type="project" value="UniProtKB"/>
</dbReference>
<dbReference type="GO" id="GO:0043065">
    <property type="term" value="P:positive regulation of apoptotic process"/>
    <property type="evidence" value="ECO:0000314"/>
    <property type="project" value="UniProtKB"/>
</dbReference>
<dbReference type="GO" id="GO:1904094">
    <property type="term" value="P:positive regulation of autophagic cell death"/>
    <property type="evidence" value="ECO:0000315"/>
    <property type="project" value="ComplexPortal"/>
</dbReference>
<dbReference type="GO" id="GO:0010508">
    <property type="term" value="P:positive regulation of autophagy"/>
    <property type="evidence" value="ECO:0000315"/>
    <property type="project" value="ParkinsonsUK-UCL"/>
</dbReference>
<dbReference type="GO" id="GO:0046777">
    <property type="term" value="P:protein autophosphorylation"/>
    <property type="evidence" value="ECO:0000314"/>
    <property type="project" value="UniProtKB"/>
</dbReference>
<dbReference type="GO" id="GO:0006468">
    <property type="term" value="P:protein phosphorylation"/>
    <property type="evidence" value="ECO:0000314"/>
    <property type="project" value="UniProtKB"/>
</dbReference>
<dbReference type="GO" id="GO:0042981">
    <property type="term" value="P:regulation of apoptotic process"/>
    <property type="evidence" value="ECO:0000304"/>
    <property type="project" value="UniProtKB"/>
</dbReference>
<dbReference type="GO" id="GO:0010506">
    <property type="term" value="P:regulation of autophagy"/>
    <property type="evidence" value="ECO:0000304"/>
    <property type="project" value="UniProtKB"/>
</dbReference>
<dbReference type="GO" id="GO:2000310">
    <property type="term" value="P:regulation of NMDA receptor activity"/>
    <property type="evidence" value="ECO:0000250"/>
    <property type="project" value="UniProtKB"/>
</dbReference>
<dbReference type="GO" id="GO:0002834">
    <property type="term" value="P:regulation of response to tumor cell"/>
    <property type="evidence" value="ECO:0000314"/>
    <property type="project" value="ComplexPortal"/>
</dbReference>
<dbReference type="CDD" id="cd08782">
    <property type="entry name" value="Death_DAPK1"/>
    <property type="match status" value="1"/>
</dbReference>
<dbReference type="CDD" id="cd14194">
    <property type="entry name" value="STKc_DAPK1"/>
    <property type="match status" value="1"/>
</dbReference>
<dbReference type="FunFam" id="1.10.533.10:FF:000008">
    <property type="entry name" value="Death associated protein kinase 1"/>
    <property type="match status" value="1"/>
</dbReference>
<dbReference type="FunFam" id="1.25.40.20:FF:000056">
    <property type="entry name" value="Death associated protein kinase 1"/>
    <property type="match status" value="1"/>
</dbReference>
<dbReference type="FunFam" id="1.25.40.20:FF:000086">
    <property type="entry name" value="Death associated protein kinase 1"/>
    <property type="match status" value="1"/>
</dbReference>
<dbReference type="FunFam" id="3.30.200.20:FF:000110">
    <property type="entry name" value="Death-associated kinase 3, isoform CRA_a"/>
    <property type="match status" value="1"/>
</dbReference>
<dbReference type="FunFam" id="1.20.5.460:FF:000003">
    <property type="entry name" value="Death-associated protein kinase 1"/>
    <property type="match status" value="1"/>
</dbReference>
<dbReference type="FunFam" id="1.10.510.10:FF:000250">
    <property type="entry name" value="Death-associated protein kinase 3"/>
    <property type="match status" value="1"/>
</dbReference>
<dbReference type="Gene3D" id="1.25.40.20">
    <property type="entry name" value="Ankyrin repeat-containing domain"/>
    <property type="match status" value="3"/>
</dbReference>
<dbReference type="Gene3D" id="1.10.533.10">
    <property type="entry name" value="Death Domain, Fas"/>
    <property type="match status" value="1"/>
</dbReference>
<dbReference type="Gene3D" id="3.40.50.300">
    <property type="entry name" value="P-loop containing nucleotide triphosphate hydrolases"/>
    <property type="match status" value="1"/>
</dbReference>
<dbReference type="Gene3D" id="3.30.200.20">
    <property type="entry name" value="Phosphorylase Kinase, domain 1"/>
    <property type="match status" value="1"/>
</dbReference>
<dbReference type="Gene3D" id="1.20.5.460">
    <property type="entry name" value="Single helix bin"/>
    <property type="match status" value="1"/>
</dbReference>
<dbReference type="Gene3D" id="1.10.510.10">
    <property type="entry name" value="Transferase(Phosphotransferase) domain 1"/>
    <property type="match status" value="1"/>
</dbReference>
<dbReference type="InterPro" id="IPR002110">
    <property type="entry name" value="Ankyrin_rpt"/>
</dbReference>
<dbReference type="InterPro" id="IPR036770">
    <property type="entry name" value="Ankyrin_rpt-contain_sf"/>
</dbReference>
<dbReference type="InterPro" id="IPR020676">
    <property type="entry name" value="DAPK1_cat"/>
</dbReference>
<dbReference type="InterPro" id="IPR011029">
    <property type="entry name" value="DEATH-like_dom_sf"/>
</dbReference>
<dbReference type="InterPro" id="IPR000488">
    <property type="entry name" value="Death_dom"/>
</dbReference>
<dbReference type="InterPro" id="IPR011009">
    <property type="entry name" value="Kinase-like_dom_sf"/>
</dbReference>
<dbReference type="InterPro" id="IPR027417">
    <property type="entry name" value="P-loop_NTPase"/>
</dbReference>
<dbReference type="InterPro" id="IPR000719">
    <property type="entry name" value="Prot_kinase_dom"/>
</dbReference>
<dbReference type="InterPro" id="IPR017441">
    <property type="entry name" value="Protein_kinase_ATP_BS"/>
</dbReference>
<dbReference type="InterPro" id="IPR020859">
    <property type="entry name" value="ROC"/>
</dbReference>
<dbReference type="InterPro" id="IPR008271">
    <property type="entry name" value="Ser/Thr_kinase_AS"/>
</dbReference>
<dbReference type="PANTHER" id="PTHR24342:SF17">
    <property type="entry name" value="DEATH-ASSOCIATED PROTEIN KINASE 1"/>
    <property type="match status" value="1"/>
</dbReference>
<dbReference type="PANTHER" id="PTHR24342">
    <property type="entry name" value="SERINE/THREONINE-PROTEIN KINASE 17"/>
    <property type="match status" value="1"/>
</dbReference>
<dbReference type="Pfam" id="PF00023">
    <property type="entry name" value="Ank"/>
    <property type="match status" value="1"/>
</dbReference>
<dbReference type="Pfam" id="PF12796">
    <property type="entry name" value="Ank_2"/>
    <property type="match status" value="2"/>
</dbReference>
<dbReference type="Pfam" id="PF13637">
    <property type="entry name" value="Ank_4"/>
    <property type="match status" value="1"/>
</dbReference>
<dbReference type="Pfam" id="PF00531">
    <property type="entry name" value="Death"/>
    <property type="match status" value="1"/>
</dbReference>
<dbReference type="Pfam" id="PF00069">
    <property type="entry name" value="Pkinase"/>
    <property type="match status" value="1"/>
</dbReference>
<dbReference type="PRINTS" id="PR01415">
    <property type="entry name" value="ANKYRIN"/>
</dbReference>
<dbReference type="SMART" id="SM00248">
    <property type="entry name" value="ANK"/>
    <property type="match status" value="9"/>
</dbReference>
<dbReference type="SMART" id="SM00005">
    <property type="entry name" value="DEATH"/>
    <property type="match status" value="1"/>
</dbReference>
<dbReference type="SMART" id="SM00220">
    <property type="entry name" value="S_TKc"/>
    <property type="match status" value="1"/>
</dbReference>
<dbReference type="SUPFAM" id="SSF48403">
    <property type="entry name" value="Ankyrin repeat"/>
    <property type="match status" value="1"/>
</dbReference>
<dbReference type="SUPFAM" id="SSF47986">
    <property type="entry name" value="DEATH domain"/>
    <property type="match status" value="1"/>
</dbReference>
<dbReference type="SUPFAM" id="SSF52540">
    <property type="entry name" value="P-loop containing nucleoside triphosphate hydrolases"/>
    <property type="match status" value="1"/>
</dbReference>
<dbReference type="SUPFAM" id="SSF56112">
    <property type="entry name" value="Protein kinase-like (PK-like)"/>
    <property type="match status" value="1"/>
</dbReference>
<dbReference type="PROSITE" id="PS50297">
    <property type="entry name" value="ANK_REP_REGION"/>
    <property type="match status" value="1"/>
</dbReference>
<dbReference type="PROSITE" id="PS50088">
    <property type="entry name" value="ANK_REPEAT"/>
    <property type="match status" value="7"/>
</dbReference>
<dbReference type="PROSITE" id="PS50017">
    <property type="entry name" value="DEATH_DOMAIN"/>
    <property type="match status" value="1"/>
</dbReference>
<dbReference type="PROSITE" id="PS00107">
    <property type="entry name" value="PROTEIN_KINASE_ATP"/>
    <property type="match status" value="1"/>
</dbReference>
<dbReference type="PROSITE" id="PS50011">
    <property type="entry name" value="PROTEIN_KINASE_DOM"/>
    <property type="match status" value="1"/>
</dbReference>
<dbReference type="PROSITE" id="PS00108">
    <property type="entry name" value="PROTEIN_KINASE_ST"/>
    <property type="match status" value="1"/>
</dbReference>
<dbReference type="PROSITE" id="PS51424">
    <property type="entry name" value="ROC"/>
    <property type="match status" value="1"/>
</dbReference>
<reference key="1">
    <citation type="journal article" date="1995" name="Genes Dev.">
        <title>Identification of a novel serine/threonine kinase and a novel 15-kD protein as potential mediators of the gamma interferon-induced cell death.</title>
        <authorList>
            <person name="Deiss L.P."/>
            <person name="Feinstein E."/>
            <person name="Berissi H."/>
            <person name="Cohen O."/>
            <person name="Kimchi A."/>
        </authorList>
    </citation>
    <scope>NUCLEOTIDE SEQUENCE [MRNA] (ISOFORM 1)</scope>
    <scope>FUNCTION</scope>
    <scope>INDUCTION</scope>
    <scope>MUTAGENESIS OF LYS-42</scope>
    <scope>VARIANT ASN-1346</scope>
</reference>
<reference key="2">
    <citation type="submission" date="1997-04" db="EMBL/GenBank/DDBJ databases">
        <authorList>
            <person name="Feinstein E."/>
        </authorList>
    </citation>
    <scope>SEQUENCE REVISION TO 164-171</scope>
</reference>
<reference key="3">
    <citation type="journal article" date="2004" name="Nat. Genet.">
        <title>Complete sequencing and characterization of 21,243 full-length human cDNAs.</title>
        <authorList>
            <person name="Ota T."/>
            <person name="Suzuki Y."/>
            <person name="Nishikawa T."/>
            <person name="Otsuki T."/>
            <person name="Sugiyama T."/>
            <person name="Irie R."/>
            <person name="Wakamatsu A."/>
            <person name="Hayashi K."/>
            <person name="Sato H."/>
            <person name="Nagai K."/>
            <person name="Kimura K."/>
            <person name="Makita H."/>
            <person name="Sekine M."/>
            <person name="Obayashi M."/>
            <person name="Nishi T."/>
            <person name="Shibahara T."/>
            <person name="Tanaka T."/>
            <person name="Ishii S."/>
            <person name="Yamamoto J."/>
            <person name="Saito K."/>
            <person name="Kawai Y."/>
            <person name="Isono Y."/>
            <person name="Nakamura Y."/>
            <person name="Nagahari K."/>
            <person name="Murakami K."/>
            <person name="Yasuda T."/>
            <person name="Iwayanagi T."/>
            <person name="Wagatsuma M."/>
            <person name="Shiratori A."/>
            <person name="Sudo H."/>
            <person name="Hosoiri T."/>
            <person name="Kaku Y."/>
            <person name="Kodaira H."/>
            <person name="Kondo H."/>
            <person name="Sugawara M."/>
            <person name="Takahashi M."/>
            <person name="Kanda K."/>
            <person name="Yokoi T."/>
            <person name="Furuya T."/>
            <person name="Kikkawa E."/>
            <person name="Omura Y."/>
            <person name="Abe K."/>
            <person name="Kamihara K."/>
            <person name="Katsuta N."/>
            <person name="Sato K."/>
            <person name="Tanikawa M."/>
            <person name="Yamazaki M."/>
            <person name="Ninomiya K."/>
            <person name="Ishibashi T."/>
            <person name="Yamashita H."/>
            <person name="Murakawa K."/>
            <person name="Fujimori K."/>
            <person name="Tanai H."/>
            <person name="Kimata M."/>
            <person name="Watanabe M."/>
            <person name="Hiraoka S."/>
            <person name="Chiba Y."/>
            <person name="Ishida S."/>
            <person name="Ono Y."/>
            <person name="Takiguchi S."/>
            <person name="Watanabe S."/>
            <person name="Yosida M."/>
            <person name="Hotuta T."/>
            <person name="Kusano J."/>
            <person name="Kanehori K."/>
            <person name="Takahashi-Fujii A."/>
            <person name="Hara H."/>
            <person name="Tanase T.-O."/>
            <person name="Nomura Y."/>
            <person name="Togiya S."/>
            <person name="Komai F."/>
            <person name="Hara R."/>
            <person name="Takeuchi K."/>
            <person name="Arita M."/>
            <person name="Imose N."/>
            <person name="Musashino K."/>
            <person name="Yuuki H."/>
            <person name="Oshima A."/>
            <person name="Sasaki N."/>
            <person name="Aotsuka S."/>
            <person name="Yoshikawa Y."/>
            <person name="Matsunawa H."/>
            <person name="Ichihara T."/>
            <person name="Shiohata N."/>
            <person name="Sano S."/>
            <person name="Moriya S."/>
            <person name="Momiyama H."/>
            <person name="Satoh N."/>
            <person name="Takami S."/>
            <person name="Terashima Y."/>
            <person name="Suzuki O."/>
            <person name="Nakagawa S."/>
            <person name="Senoh A."/>
            <person name="Mizoguchi H."/>
            <person name="Goto Y."/>
            <person name="Shimizu F."/>
            <person name="Wakebe H."/>
            <person name="Hishigaki H."/>
            <person name="Watanabe T."/>
            <person name="Sugiyama A."/>
            <person name="Takemoto M."/>
            <person name="Kawakami B."/>
            <person name="Yamazaki M."/>
            <person name="Watanabe K."/>
            <person name="Kumagai A."/>
            <person name="Itakura S."/>
            <person name="Fukuzumi Y."/>
            <person name="Fujimori Y."/>
            <person name="Komiyama M."/>
            <person name="Tashiro H."/>
            <person name="Tanigami A."/>
            <person name="Fujiwara T."/>
            <person name="Ono T."/>
            <person name="Yamada K."/>
            <person name="Fujii Y."/>
            <person name="Ozaki K."/>
            <person name="Hirao M."/>
            <person name="Ohmori Y."/>
            <person name="Kawabata A."/>
            <person name="Hikiji T."/>
            <person name="Kobatake N."/>
            <person name="Inagaki H."/>
            <person name="Ikema Y."/>
            <person name="Okamoto S."/>
            <person name="Okitani R."/>
            <person name="Kawakami T."/>
            <person name="Noguchi S."/>
            <person name="Itoh T."/>
            <person name="Shigeta K."/>
            <person name="Senba T."/>
            <person name="Matsumura K."/>
            <person name="Nakajima Y."/>
            <person name="Mizuno T."/>
            <person name="Morinaga M."/>
            <person name="Sasaki M."/>
            <person name="Togashi T."/>
            <person name="Oyama M."/>
            <person name="Hata H."/>
            <person name="Watanabe M."/>
            <person name="Komatsu T."/>
            <person name="Mizushima-Sugano J."/>
            <person name="Satoh T."/>
            <person name="Shirai Y."/>
            <person name="Takahashi Y."/>
            <person name="Nakagawa K."/>
            <person name="Okumura K."/>
            <person name="Nagase T."/>
            <person name="Nomura N."/>
            <person name="Kikuchi H."/>
            <person name="Masuho Y."/>
            <person name="Yamashita R."/>
            <person name="Nakai K."/>
            <person name="Yada T."/>
            <person name="Nakamura Y."/>
            <person name="Ohara O."/>
            <person name="Isogai T."/>
            <person name="Sugano S."/>
        </authorList>
    </citation>
    <scope>NUCLEOTIDE SEQUENCE [LARGE SCALE MRNA] (ISOFORM 2)</scope>
    <source>
        <tissue>Placenta</tissue>
    </source>
</reference>
<reference key="4">
    <citation type="journal article" date="2007" name="BMC Genomics">
        <title>The full-ORF clone resource of the German cDNA consortium.</title>
        <authorList>
            <person name="Bechtel S."/>
            <person name="Rosenfelder H."/>
            <person name="Duda A."/>
            <person name="Schmidt C.P."/>
            <person name="Ernst U."/>
            <person name="Wellenreuther R."/>
            <person name="Mehrle A."/>
            <person name="Schuster C."/>
            <person name="Bahr A."/>
            <person name="Bloecker H."/>
            <person name="Heubner D."/>
            <person name="Hoerlein A."/>
            <person name="Michel G."/>
            <person name="Wedler H."/>
            <person name="Koehrer K."/>
            <person name="Ottenwaelder B."/>
            <person name="Poustka A."/>
            <person name="Wiemann S."/>
            <person name="Schupp I."/>
        </authorList>
    </citation>
    <scope>NUCLEOTIDE SEQUENCE [LARGE SCALE MRNA] (ISOFORM 1)</scope>
    <scope>VARIANT ASN-1346</scope>
    <source>
        <tissue>Amygdala</tissue>
    </source>
</reference>
<reference key="5">
    <citation type="submission" date="2006-03" db="EMBL/GenBank/DDBJ databases">
        <authorList>
            <consortium name="NIEHS SNPs program"/>
        </authorList>
    </citation>
    <scope>NUCLEOTIDE SEQUENCE [GENOMIC DNA]</scope>
    <scope>VARIANTS LEU-591; MET-622; ASN-1346 AND VAL-1405</scope>
</reference>
<reference key="6">
    <citation type="journal article" date="2004" name="Nature">
        <title>DNA sequence and analysis of human chromosome 9.</title>
        <authorList>
            <person name="Humphray S.J."/>
            <person name="Oliver K."/>
            <person name="Hunt A.R."/>
            <person name="Plumb R.W."/>
            <person name="Loveland J.E."/>
            <person name="Howe K.L."/>
            <person name="Andrews T.D."/>
            <person name="Searle S."/>
            <person name="Hunt S.E."/>
            <person name="Scott C.E."/>
            <person name="Jones M.C."/>
            <person name="Ainscough R."/>
            <person name="Almeida J.P."/>
            <person name="Ambrose K.D."/>
            <person name="Ashwell R.I.S."/>
            <person name="Babbage A.K."/>
            <person name="Babbage S."/>
            <person name="Bagguley C.L."/>
            <person name="Bailey J."/>
            <person name="Banerjee R."/>
            <person name="Barker D.J."/>
            <person name="Barlow K.F."/>
            <person name="Bates K."/>
            <person name="Beasley H."/>
            <person name="Beasley O."/>
            <person name="Bird C.P."/>
            <person name="Bray-Allen S."/>
            <person name="Brown A.J."/>
            <person name="Brown J.Y."/>
            <person name="Burford D."/>
            <person name="Burrill W."/>
            <person name="Burton J."/>
            <person name="Carder C."/>
            <person name="Carter N.P."/>
            <person name="Chapman J.C."/>
            <person name="Chen Y."/>
            <person name="Clarke G."/>
            <person name="Clark S.Y."/>
            <person name="Clee C.M."/>
            <person name="Clegg S."/>
            <person name="Collier R.E."/>
            <person name="Corby N."/>
            <person name="Crosier M."/>
            <person name="Cummings A.T."/>
            <person name="Davies J."/>
            <person name="Dhami P."/>
            <person name="Dunn M."/>
            <person name="Dutta I."/>
            <person name="Dyer L.W."/>
            <person name="Earthrowl M.E."/>
            <person name="Faulkner L."/>
            <person name="Fleming C.J."/>
            <person name="Frankish A."/>
            <person name="Frankland J.A."/>
            <person name="French L."/>
            <person name="Fricker D.G."/>
            <person name="Garner P."/>
            <person name="Garnett J."/>
            <person name="Ghori J."/>
            <person name="Gilbert J.G.R."/>
            <person name="Glison C."/>
            <person name="Grafham D.V."/>
            <person name="Gribble S."/>
            <person name="Griffiths C."/>
            <person name="Griffiths-Jones S."/>
            <person name="Grocock R."/>
            <person name="Guy J."/>
            <person name="Hall R.E."/>
            <person name="Hammond S."/>
            <person name="Harley J.L."/>
            <person name="Harrison E.S.I."/>
            <person name="Hart E.A."/>
            <person name="Heath P.D."/>
            <person name="Henderson C.D."/>
            <person name="Hopkins B.L."/>
            <person name="Howard P.J."/>
            <person name="Howden P.J."/>
            <person name="Huckle E."/>
            <person name="Johnson C."/>
            <person name="Johnson D."/>
            <person name="Joy A.A."/>
            <person name="Kay M."/>
            <person name="Keenan S."/>
            <person name="Kershaw J.K."/>
            <person name="Kimberley A.M."/>
            <person name="King A."/>
            <person name="Knights A."/>
            <person name="Laird G.K."/>
            <person name="Langford C."/>
            <person name="Lawlor S."/>
            <person name="Leongamornlert D.A."/>
            <person name="Leversha M."/>
            <person name="Lloyd C."/>
            <person name="Lloyd D.M."/>
            <person name="Lovell J."/>
            <person name="Martin S."/>
            <person name="Mashreghi-Mohammadi M."/>
            <person name="Matthews L."/>
            <person name="McLaren S."/>
            <person name="McLay K.E."/>
            <person name="McMurray A."/>
            <person name="Milne S."/>
            <person name="Nickerson T."/>
            <person name="Nisbett J."/>
            <person name="Nordsiek G."/>
            <person name="Pearce A.V."/>
            <person name="Peck A.I."/>
            <person name="Porter K.M."/>
            <person name="Pandian R."/>
            <person name="Pelan S."/>
            <person name="Phillimore B."/>
            <person name="Povey S."/>
            <person name="Ramsey Y."/>
            <person name="Rand V."/>
            <person name="Scharfe M."/>
            <person name="Sehra H.K."/>
            <person name="Shownkeen R."/>
            <person name="Sims S.K."/>
            <person name="Skuce C.D."/>
            <person name="Smith M."/>
            <person name="Steward C.A."/>
            <person name="Swarbreck D."/>
            <person name="Sycamore N."/>
            <person name="Tester J."/>
            <person name="Thorpe A."/>
            <person name="Tracey A."/>
            <person name="Tromans A."/>
            <person name="Thomas D.W."/>
            <person name="Wall M."/>
            <person name="Wallis J.M."/>
            <person name="West A.P."/>
            <person name="Whitehead S.L."/>
            <person name="Willey D.L."/>
            <person name="Williams S.A."/>
            <person name="Wilming L."/>
            <person name="Wray P.W."/>
            <person name="Young L."/>
            <person name="Ashurst J.L."/>
            <person name="Coulson A."/>
            <person name="Blocker H."/>
            <person name="Durbin R.M."/>
            <person name="Sulston J.E."/>
            <person name="Hubbard T."/>
            <person name="Jackson M.J."/>
            <person name="Bentley D.R."/>
            <person name="Beck S."/>
            <person name="Rogers J."/>
            <person name="Dunham I."/>
        </authorList>
    </citation>
    <scope>NUCLEOTIDE SEQUENCE [LARGE SCALE GENOMIC DNA]</scope>
    <scope>VARIANT ASN-1346</scope>
</reference>
<reference key="7">
    <citation type="submission" date="2005-07" db="EMBL/GenBank/DDBJ databases">
        <authorList>
            <person name="Mural R.J."/>
            <person name="Istrail S."/>
            <person name="Sutton G.G."/>
            <person name="Florea L."/>
            <person name="Halpern A.L."/>
            <person name="Mobarry C.M."/>
            <person name="Lippert R."/>
            <person name="Walenz B."/>
            <person name="Shatkay H."/>
            <person name="Dew I."/>
            <person name="Miller J.R."/>
            <person name="Flanigan M.J."/>
            <person name="Edwards N.J."/>
            <person name="Bolanos R."/>
            <person name="Fasulo D."/>
            <person name="Halldorsson B.V."/>
            <person name="Hannenhalli S."/>
            <person name="Turner R."/>
            <person name="Yooseph S."/>
            <person name="Lu F."/>
            <person name="Nusskern D.R."/>
            <person name="Shue B.C."/>
            <person name="Zheng X.H."/>
            <person name="Zhong F."/>
            <person name="Delcher A.L."/>
            <person name="Huson D.H."/>
            <person name="Kravitz S.A."/>
            <person name="Mouchard L."/>
            <person name="Reinert K."/>
            <person name="Remington K.A."/>
            <person name="Clark A.G."/>
            <person name="Waterman M.S."/>
            <person name="Eichler E.E."/>
            <person name="Adams M.D."/>
            <person name="Hunkapiller M.W."/>
            <person name="Myers E.W."/>
            <person name="Venter J.C."/>
        </authorList>
    </citation>
    <scope>NUCLEOTIDE SEQUENCE [LARGE SCALE GENOMIC DNA]</scope>
</reference>
<reference key="8">
    <citation type="journal article" date="2004" name="Genome Res.">
        <title>The status, quality, and expansion of the NIH full-length cDNA project: the Mammalian Gene Collection (MGC).</title>
        <authorList>
            <consortium name="The MGC Project Team"/>
        </authorList>
    </citation>
    <scope>NUCLEOTIDE SEQUENCE [LARGE SCALE MRNA] (ISOFORMS 1 AND 4)</scope>
    <source>
        <tissue>Cerebellum</tissue>
    </source>
</reference>
<reference key="9">
    <citation type="submission" date="2003-05" db="EMBL/GenBank/DDBJ databases">
        <title>Cloning of human full-length CDSs in BD Creator(TM) system donor vector.</title>
        <authorList>
            <person name="Kalnine N."/>
            <person name="Chen X."/>
            <person name="Rolfs A."/>
            <person name="Halleck A."/>
            <person name="Hines L."/>
            <person name="Eisenstein S."/>
            <person name="Koundinya M."/>
            <person name="Raphael J."/>
            <person name="Moreira D."/>
            <person name="Kelley T."/>
            <person name="LaBaer J."/>
            <person name="Lin Y."/>
            <person name="Phelan M."/>
            <person name="Farmer A."/>
        </authorList>
    </citation>
    <scope>NUCLEOTIDE SEQUENCE [LARGE SCALE MRNA] OF 1-363</scope>
</reference>
<reference key="10">
    <citation type="journal article" date="2000" name="Mol. Cell. Biol.">
        <title>Death-associated protein kinase-related protein 1, a novel serine/threonine kinase involved in apoptosis.</title>
        <authorList>
            <person name="Inbal B."/>
            <person name="Shani G."/>
            <person name="Cohen O."/>
            <person name="Kissil J.L."/>
            <person name="Kimchi A."/>
        </authorList>
    </citation>
    <scope>FUNCTION</scope>
    <scope>SUBCELLULAR LOCATION</scope>
</reference>
<reference key="11">
    <citation type="journal article" date="2001" name="J. Biol. Chem.">
        <title>The pro-apoptotic function of death-associated protein kinase is controlled by a unique inhibitory autophosphorylation-based mechanism.</title>
        <authorList>
            <person name="Shohat G."/>
            <person name="Spivak-Kroizman T."/>
            <person name="Cohen O."/>
            <person name="Bialik S."/>
            <person name="Shani G."/>
            <person name="Berissi H."/>
            <person name="Eisenstein M."/>
            <person name="Kimchi A."/>
        </authorList>
    </citation>
    <scope>FUNCTION</scope>
    <scope>ACTIVITY REGULATION</scope>
    <scope>MUTAGENESIS OF LYS-42; SER-308 AND SER-313</scope>
    <scope>PHOSPHORYLATION AT SER-308</scope>
</reference>
<reference key="12">
    <citation type="journal article" date="2002" name="J. Cell Biol.">
        <title>DAP kinase and DRP-1 mediate membrane blebbing and the formation of autophagic vesicles during programmed cell death.</title>
        <authorList>
            <person name="Inbal B."/>
            <person name="Bialik S."/>
            <person name="Sabanay I."/>
            <person name="Shani G."/>
            <person name="Kimchi A."/>
        </authorList>
    </citation>
    <scope>FUNCTION</scope>
    <scope>SUBCELLULAR LOCATION</scope>
</reference>
<reference key="13">
    <citation type="journal article" date="2003" name="J. Biol. Chem.">
        <title>Ca2+-dependent phosphorylation of syntaxin-1A by the death-associated protein (DAP) kinase regulates its interaction with Munc18.</title>
        <authorList>
            <person name="Tian J.H."/>
            <person name="Das S."/>
            <person name="Sheng Z.H."/>
        </authorList>
    </citation>
    <scope>FUNCTION IN PHOSPHORYLATION OF STX1A</scope>
    <scope>INTERACTION WITH STX1A</scope>
</reference>
<reference key="14">
    <citation type="journal article" date="2004" name="Mol. Cell. Biol.">
        <title>Death-associated protein kinase phosphorylates ZIP kinase, forming a unique kinase hierarchy to activate its cell death functions.</title>
        <authorList>
            <person name="Shani G."/>
            <person name="Marash L."/>
            <person name="Gozuacik D."/>
            <person name="Bialik S."/>
            <person name="Teitelbaum L."/>
            <person name="Shohat G."/>
            <person name="Kimchi A."/>
        </authorList>
    </citation>
    <scope>FUNCTION IN PHOSPHORYLATION OF DAPK3</scope>
    <scope>INTERACTION WITH DAPK3</scope>
</reference>
<reference key="15">
    <citation type="journal article" date="2005" name="Biotechnol. Lett.">
        <title>Programmed cell death 6 (PDCD6) protein interacts with death-associated protein kinase 1 (DAPk1): additive effect on apoptosis via caspase-3 dependent pathway.</title>
        <authorList>
            <person name="Lee J.H."/>
            <person name="Rho S.B."/>
            <person name="Chun T."/>
        </authorList>
    </citation>
    <scope>INTERACTION WITH PDCD6</scope>
</reference>
<reference key="16">
    <citation type="journal article" date="2005" name="Curr. Biol.">
        <title>The tumor suppressor DAP kinase is a target of RSK-mediated survival signaling.</title>
        <authorList>
            <person name="Anjum R."/>
            <person name="Roux P.P."/>
            <person name="Ballif B.A."/>
            <person name="Gygi S.P."/>
            <person name="Blenis J."/>
        </authorList>
    </citation>
    <scope>PHOSPHORYLATION AT SER-289</scope>
</reference>
<reference key="17">
    <citation type="journal article" date="2005" name="EMBO J.">
        <title>Bidirectional signals transduced by DAPK-ERK interaction promote the apoptotic effect of DAPK.</title>
        <authorList>
            <person name="Chen C.H."/>
            <person name="Wang W.J."/>
            <person name="Kuo J.C."/>
            <person name="Tsai H.C."/>
            <person name="Lin J.R."/>
            <person name="Chang Z.F."/>
            <person name="Chen R.H."/>
        </authorList>
    </citation>
    <scope>PHOSPHORYLATION AT SER-734</scope>
    <scope>INTERACTION WITH MAPK1 AND MAPK3</scope>
</reference>
<reference key="18">
    <citation type="journal article" date="2005" name="EMBO J.">
        <title>The dependence receptor UNC5H2 mediates apoptosis through DAP-kinase.</title>
        <authorList>
            <person name="Llambi F."/>
            <person name="Lourenco F.C."/>
            <person name="Gozuacik D."/>
            <person name="Guix C."/>
            <person name="Pays L."/>
            <person name="Del Rio G."/>
            <person name="Kimchi A."/>
            <person name="Mehlen P."/>
        </authorList>
    </citation>
    <scope>PHOSPHORYLATION AT SER-308</scope>
    <scope>ACTIVITY REGULATION</scope>
    <scope>INTERACTION WITH UNC5B</scope>
</reference>
<reference key="19">
    <citation type="journal article" date="2006" name="Annu. Rev. Biochem.">
        <title>The death-associated protein kinases: structure, function, and beyond.</title>
        <authorList>
            <person name="Bialik S."/>
            <person name="Kimchi A."/>
        </authorList>
    </citation>
    <scope>REVIEW ON FUNCTION</scope>
</reference>
<reference key="20">
    <citation type="journal article" date="2006" name="J. Biol. Chem.">
        <title>Control of death-associated protein kinase (DAPK) activity by phosphorylation and proteasomal degradation.</title>
        <authorList>
            <person name="Jin Y."/>
            <person name="Blue E.K."/>
            <person name="Gallagher P.J."/>
        </authorList>
    </citation>
    <scope>ALTERNATIVE SPLICING (ISOFORM 3)</scope>
    <scope>PHOSPHORYLATION AT SER-308</scope>
    <scope>DEPHOSPHORYLATION</scope>
    <scope>ACTIVITY REGULATION</scope>
</reference>
<reference key="21">
    <citation type="journal article" date="2007" name="Cell Death Differ.">
        <title>DAP kinase regulates JNK signaling by binding and activating protein kinase D under oxidative stress.</title>
        <authorList>
            <person name="Eisenberg-Lerner A."/>
            <person name="Kimchi A."/>
        </authorList>
    </citation>
    <scope>FUNCTION IN PHOSPHORYLATION OF PRKD1</scope>
    <scope>INTERACTION WITH PRKD1</scope>
</reference>
<reference key="22">
    <citation type="journal article" date="2007" name="J. Cell Sci.">
        <title>DAP kinase mediates the phosphorylation of tropomyosin-1 downstream of the ERK pathway, which regulates the formation of stress fibers in response to oxidative stress.</title>
        <authorList>
            <person name="Houle F."/>
            <person name="Poirier A."/>
            <person name="Dumaresq J."/>
            <person name="Huot J."/>
        </authorList>
    </citation>
    <scope>FUNCTION IN PHOSPHORYLATION OF TPM1</scope>
</reference>
<reference key="23">
    <citation type="journal article" date="2008" name="FEBS J.">
        <title>An alternative transcript from the death-associated protein kinase 1 locus encoding a small protein selectively mediates membrane blebbing.</title>
        <authorList>
            <person name="Lin Y."/>
            <person name="Stevens C."/>
            <person name="Hrstka R."/>
            <person name="Harrison B."/>
            <person name="Fourtouna A."/>
            <person name="Pathuri S."/>
            <person name="Vojtesek B."/>
            <person name="Hupp T."/>
        </authorList>
    </citation>
    <scope>ALTERNATIVE SPLICING (ISOFORM 2)</scope>
    <scope>PROTEOLYTIC PROCESSING</scope>
    <scope>FUNCTION</scope>
    <scope>SUBCELLULAR LOCATION</scope>
    <scope>TISSUE SPECIFICITY</scope>
</reference>
<reference key="24">
    <citation type="journal article" date="2008" name="J. Biol. Chem.">
        <title>DAPK-1 binding to a linear peptide motif in MAP1B stimulates autophagy and membrane blebbing.</title>
        <authorList>
            <person name="Harrison B."/>
            <person name="Kraus M."/>
            <person name="Burch L."/>
            <person name="Stevens C."/>
            <person name="Craig A."/>
            <person name="Gordon-Weeks P."/>
            <person name="Hupp T.R."/>
        </authorList>
    </citation>
    <scope>FUNCTION</scope>
    <scope>SUBCELLULAR LOCATION</scope>
    <scope>INTERACTION WITH MAP1B</scope>
</reference>
<reference key="25">
    <citation type="journal article" date="2008" name="Mol. Cell">
        <title>DAPK-ZIPK-L13a axis constitutes a negative-feedback module regulating inflammatory gene expression.</title>
        <authorList>
            <person name="Mukhopadhyay R."/>
            <person name="Ray P.S."/>
            <person name="Arif A."/>
            <person name="Brady A.K."/>
            <person name="Kinter M."/>
            <person name="Fox P.L."/>
        </authorList>
    </citation>
    <scope>FUNCTION</scope>
</reference>
<reference key="26">
    <citation type="journal article" date="2009" name="EMBO Rep.">
        <title>DAP-kinase-mediated phosphorylation on the BH3 domain of beclin 1 promotes dissociation of beclin 1 from Bcl-XL and induction of autophagy.</title>
        <authorList>
            <person name="Zalckvar E."/>
            <person name="Berissi H."/>
            <person name="Mizrachy L."/>
            <person name="Idelchuk Y."/>
            <person name="Koren I."/>
            <person name="Eisenstein M."/>
            <person name="Sabanay H."/>
            <person name="Pinkas-Kramarski R."/>
            <person name="Kimchi A."/>
        </authorList>
    </citation>
    <scope>FUNCTION IN PHOSPHORYLATION OF BECN1</scope>
    <scope>INTERACTION WITH BECN1</scope>
</reference>
<reference key="27">
    <citation type="journal article" date="2009" name="J. Biol. Chem.">
        <title>Peptide combinatorial libraries identify TSC2 as a death-associated protein kinase (DAPK) death domain-binding protein and reveal a stimulatory role for DAPK in mTORC1 signaling.</title>
        <authorList>
            <person name="Stevens C."/>
            <person name="Lin Y."/>
            <person name="Harrison B."/>
            <person name="Burch L."/>
            <person name="Ridgway R.A."/>
            <person name="Sansom O."/>
            <person name="Hupp T."/>
        </authorList>
    </citation>
    <scope>FUNCTION IN PHOSPHORYLATION OF TSC2 AND RPS6</scope>
    <scope>INTERACTION WITH TSC2</scope>
</reference>
<reference key="28">
    <citation type="journal article" date="2010" name="EMBO J.">
        <title>The Cullin 3 substrate adaptor KLHL20 mediates DAPK ubiquitination to control interferon responses.</title>
        <authorList>
            <person name="Lee Y.R."/>
            <person name="Yuan W.C."/>
            <person name="Ho H.C."/>
            <person name="Chen C.H."/>
            <person name="Shih H.M."/>
            <person name="Chen R.H."/>
        </authorList>
    </citation>
    <scope>UBIQUITINATION</scope>
    <scope>INTERACTION WITH KLHL20</scope>
</reference>
<reference key="29">
    <citation type="journal article" date="2010" name="FEBS J.">
        <title>Death-associated protein kinase (DAPK) and signal transduction: additional roles beyond cell death.</title>
        <authorList>
            <person name="Lin Y."/>
            <person name="Hupp T.R."/>
            <person name="Stevens C."/>
        </authorList>
    </citation>
    <scope>REVIEW ON FUNCTION</scope>
</reference>
<reference key="30">
    <citation type="journal article" date="2011" name="Mol. Cell">
        <title>Death-associated protein kinase 1 phosphorylates Pin1 and inhibits its prolyl isomerase activity and cellular function.</title>
        <authorList>
            <person name="Lee T.H."/>
            <person name="Chen C.H."/>
            <person name="Suizu F."/>
            <person name="Huang P."/>
            <person name="Schiene-Fischer C."/>
            <person name="Daum S."/>
            <person name="Zhang Y.J."/>
            <person name="Goate A."/>
            <person name="Chen R.H."/>
            <person name="Zhou X.Z."/>
            <person name="Lu K.P."/>
        </authorList>
    </citation>
    <scope>FUNCTION IN PHOSPHORYLATION OF PIN1</scope>
    <scope>INTERACTION WITH PIN1</scope>
</reference>
<reference key="31">
    <citation type="journal article" date="2011" name="PLoS ONE">
        <title>New modularity of DAP-kinases: alternative splicing of the DRP-1 gene produces a ZIPk-like isoform.</title>
        <authorList>
            <person name="Shoval Y."/>
            <person name="Berissi H."/>
            <person name="Kimchi A."/>
            <person name="Pietrokovski S."/>
        </authorList>
    </citation>
    <scope>FUNCTION</scope>
</reference>
<reference key="32">
    <citation type="journal article" date="2011" name="Sci. Signal.">
        <title>System-wide temporal characterization of the proteome and phosphoproteome of human embryonic stem cell differentiation.</title>
        <authorList>
            <person name="Rigbolt K.T."/>
            <person name="Prokhorova T.A."/>
            <person name="Akimov V."/>
            <person name="Henningsen J."/>
            <person name="Johansen P.T."/>
            <person name="Kratchmarova I."/>
            <person name="Kassem M."/>
            <person name="Mann M."/>
            <person name="Olsen J.V."/>
            <person name="Blagoev B."/>
        </authorList>
    </citation>
    <scope>PHOSPHORYLATION [LARGE SCALE ANALYSIS] AT SER-333</scope>
    <scope>IDENTIFICATION BY MASS SPECTROMETRY [LARGE SCALE ANALYSIS]</scope>
</reference>
<reference key="33">
    <citation type="journal article" date="2013" name="J. Proteome Res.">
        <title>Toward a comprehensive characterization of a human cancer cell phosphoproteome.</title>
        <authorList>
            <person name="Zhou H."/>
            <person name="Di Palma S."/>
            <person name="Preisinger C."/>
            <person name="Peng M."/>
            <person name="Polat A.N."/>
            <person name="Heck A.J."/>
            <person name="Mohammed S."/>
        </authorList>
    </citation>
    <scope>PHOSPHORYLATION [LARGE SCALE ANALYSIS] AT SER-319</scope>
    <scope>IDENTIFICATION BY MASS SPECTROMETRY [LARGE SCALE ANALYSIS]</scope>
    <source>
        <tissue>Erythroleukemia</tissue>
    </source>
</reference>
<reference key="34">
    <citation type="journal article" date="2014" name="J. Proteomics">
        <title>An enzyme assisted RP-RPLC approach for in-depth analysis of human liver phosphoproteome.</title>
        <authorList>
            <person name="Bian Y."/>
            <person name="Song C."/>
            <person name="Cheng K."/>
            <person name="Dong M."/>
            <person name="Wang F."/>
            <person name="Huang J."/>
            <person name="Sun D."/>
            <person name="Wang L."/>
            <person name="Ye M."/>
            <person name="Zou H."/>
        </authorList>
    </citation>
    <scope>PHOSPHORYLATION [LARGE SCALE ANALYSIS] AT SER-333</scope>
    <scope>IDENTIFICATION BY MASS SPECTROMETRY [LARGE SCALE ANALYSIS]</scope>
    <source>
        <tissue>Liver</tissue>
    </source>
</reference>
<reference key="35">
    <citation type="journal article" date="2016" name="J. Biol. Chem.">
        <title>An Alzheimer Disease-linked Rare Mutation Potentiates Netrin Receptor Uncoordinated-5C-induced Signaling That Merges with Amyloid beta Precursor Protein Signaling.</title>
        <authorList>
            <person name="Hashimoto Y."/>
            <person name="Toyama Y."/>
            <person name="Kusakari S."/>
            <person name="Nawa M."/>
            <person name="Matsuoka M."/>
        </authorList>
    </citation>
    <scope>INTERACTION WITH UNC5C</scope>
</reference>
<reference key="36">
    <citation type="journal article" date="2001" name="Nat. Struct. Biol.">
        <title>Crystal structures of the catalytic domain of human protein kinase associated with apoptosis and tumor suppression.</title>
        <authorList>
            <person name="Tereshko V."/>
            <person name="Teplova M."/>
            <person name="Brunzelle J."/>
            <person name="Watterson D.M."/>
            <person name="Egli M."/>
        </authorList>
    </citation>
    <scope>X-RAY CRYSTALLOGRAPHY (1.5 ANGSTROMS) OF 2-285 IN COMPLEX WITH ATP ANALOG AND DIVALENT METAL CATION</scope>
</reference>
<reference key="37">
    <citation type="journal article" date="2003" name="Bioorg. Med. Chem. Lett.">
        <title>An aminopyridazine-based inhibitor of a pro-apoptotic protein kinase attenuates hypoxia-ischemia induced acute brain injury.</title>
        <authorList>
            <person name="Velentza A.V."/>
            <person name="Wainwright M.S."/>
            <person name="Zasadzki M."/>
            <person name="Mirzoeva S."/>
            <person name="Schumacher A.M."/>
            <person name="Haiech J."/>
            <person name="Focia P.J."/>
            <person name="Egli M."/>
            <person name="Watterson D.M."/>
        </authorList>
    </citation>
    <scope>X-RAY CRYSTALLOGRAPHY (1.9 ANGSTROMS) OF 2-285 IN COMPLEX WITH SYNTHETIC INHIBITOR</scope>
</reference>
<reference key="38">
    <citation type="submission" date="2006-04" db="PDB data bank">
        <title>Complex structure of kinase domain of DAP kinase with staurosporine.</title>
        <authorList>
            <person name="Ueda Y."/>
            <person name="Ogata H."/>
            <person name="Yamakawa A."/>
            <person name="Higuchi Y."/>
        </authorList>
    </citation>
    <scope>X-RAY CRYSTALLOGRAPHY (2.40 ANGSTROMS) OF 1-278 IN COMPLEX WITH INHIBITORS</scope>
</reference>
<reference key="39">
    <citation type="submission" date="2006-07" db="PDB data bank">
        <title>Recognition of human death-associated protein kinases by calmodulin.</title>
        <authorList>
            <person name="Kursula P."/>
            <person name="Vahokoski J."/>
            <person name="Wilmanns M."/>
        </authorList>
    </citation>
    <scope>X-RAY CRYSTALLOGRAPHY (1.70 ANGSTROMS) OF 302-320 IN COMPLEX WITH CALMODULIN</scope>
</reference>
<reference key="40">
    <citation type="journal article" date="2007" name="Nature">
        <title>Patterns of somatic mutation in human cancer genomes.</title>
        <authorList>
            <person name="Greenman C."/>
            <person name="Stephens P."/>
            <person name="Smith R."/>
            <person name="Dalgliesh G.L."/>
            <person name="Hunter C."/>
            <person name="Bignell G."/>
            <person name="Davies H."/>
            <person name="Teague J."/>
            <person name="Butler A."/>
            <person name="Stevens C."/>
            <person name="Edkins S."/>
            <person name="O'Meara S."/>
            <person name="Vastrik I."/>
            <person name="Schmidt E.E."/>
            <person name="Avis T."/>
            <person name="Barthorpe S."/>
            <person name="Bhamra G."/>
            <person name="Buck G."/>
            <person name="Choudhury B."/>
            <person name="Clements J."/>
            <person name="Cole J."/>
            <person name="Dicks E."/>
            <person name="Forbes S."/>
            <person name="Gray K."/>
            <person name="Halliday K."/>
            <person name="Harrison R."/>
            <person name="Hills K."/>
            <person name="Hinton J."/>
            <person name="Jenkinson A."/>
            <person name="Jones D."/>
            <person name="Menzies A."/>
            <person name="Mironenko T."/>
            <person name="Perry J."/>
            <person name="Raine K."/>
            <person name="Richardson D."/>
            <person name="Shepherd R."/>
            <person name="Small A."/>
            <person name="Tofts C."/>
            <person name="Varian J."/>
            <person name="Webb T."/>
            <person name="West S."/>
            <person name="Widaa S."/>
            <person name="Yates A."/>
            <person name="Cahill D.P."/>
            <person name="Louis D.N."/>
            <person name="Goldstraw P."/>
            <person name="Nicholson A.G."/>
            <person name="Brasseur F."/>
            <person name="Looijenga L."/>
            <person name="Weber B.L."/>
            <person name="Chiew Y.-E."/>
            <person name="DeFazio A."/>
            <person name="Greaves M.F."/>
            <person name="Green A.R."/>
            <person name="Campbell P."/>
            <person name="Birney E."/>
            <person name="Easton D.F."/>
            <person name="Chenevix-Trench G."/>
            <person name="Tan M.-H."/>
            <person name="Khoo S.K."/>
            <person name="Teh B.T."/>
            <person name="Yuen S.T."/>
            <person name="Leung S.Y."/>
            <person name="Wooster R."/>
            <person name="Futreal P.A."/>
            <person name="Stratton M.R."/>
        </authorList>
    </citation>
    <scope>VARIANTS [LARGE SCALE ANALYSIS] ILE-416; SER-461; ALA-519; TYR-540; THR-941; TRP-977; ASN-978; CYS-993; GLU-994; GLN-1005; TYR-1007; PRO-1008; CYS-1010; ALA-1018; ILE-1272; ASN-1346 AND VAL-1405</scope>
</reference>
<sequence>MTVFRQENVDDYYDTGEELGSGQFAVVKKCREKSTGLQYAAKFIKKRRTKSSRRGVSREDIEREVSILKEIQHPNVITLHEVYENKTDVILILELVAGGELFDFLAEKESLTEEEATEFLKQILNGVYYLHSLQIAHFDLKPENIMLLDRNVPKPRIKIIDFGLAHKIDFGNEFKNIFGTPEFVAPEIVNYEPLGLEADMWSIGVITYILLSGASPFLGDTKQETLANVSAVNYEFEDEYFSNTSALAKDFIRRLLVKDPKKRMTIQDSLQHPWIKPKDTQQALSRKASAVNMEKFKKFAARKKWKQSVRLISLCQRLSRSFLSRSNMSVARSDDTLDEEDSFVMKAIIHAINDDNVPGLQHLLGSLSNYDVNQPNKHGTPPLLIAAGCGNIQILQLLIKRGSRIDVQDKGGSNAVYWAARHGHVDTLKFLSENKCPLDVKDKSGEMALHVAARYGHADVAQLLCSFGSNPNIQDKEEETPLHCAAWHGYYSVAKALCEAGCNVNIKNREGETPLLTASARGYHDIVECLAEHGADLNACDKDGHIALHLAVRRCQMEVIKTLLSQGCFVDYQDRHGNTPLHVACKDGNMPIVVALCEANCNLDISNKYGRTPLHLAANNGILDVVRYLCLMGASVEALTTDGKTAEDLARSEQHEHVAGLLARLRKDTHRGLFIQQLRPTQNLQPRIKLKLFGHSGSGKTTLVESLKCGLLRSFFRRRRPRLSSTNSSRFPPSPLASKPTVSVSINNLYPGCENVSVRSRSMMFEPGLTKGMLEVFVAPTHHPHCSADDQSTKAIDIQNAYLNGVGDFSVWEFSGNPVYFCCYDYFAANDPTSIHVVVFSLEEPYEIQLNQVIFWLSFLKSLVPVEEPIAFGGKLKNPLQVVLVATHADIMNVPRPAGGEFGYDKDTSLLKEIRNRFGNDLHISNKLFVLDAGASGSKDMKVLRNHLQEIRSQIVSVCPPMTHLCEKIISTLPSWRKLNGPNQLMSLQQFVYDVQDQLNPLASEEDLRRIAQQLHSTGEINIMQSETVQDVLLLDPRWLCTNVLGKLLSVETPRALHHYRGRYTVEDIQRLVPDSDVEELLQILDAMDICARDLSSGTMVDVPALIKTDNLHRSWADEEDEVMVYGGVRIVPVEHLTPFPCGIFHKVQVNLCRWIHQQSTEGDADIRLWVNGCKLANRGAELLVLLVNHGQGIEVQVRGLETEKIKCCLLLDSVCSTIENVMATTLPGLLTVKHYLSPQQLREHHEPVMIYQPRDFFRAQTLKETSLTNTMGGYKESFSSIMCFGCHDVYSQASLGMDIHASDLNLLTRRKLSRLLDPPDPLGKDWCLLAMNLGLPDLVAKYNTSNGAPKDFLPSPLHALLREWTTYPESTVGTLMSKLRELGRRDAADFLLKASSVFKINLDGNGQEAYASSCNSGTSYNSISSVVSR</sequence>
<keyword id="KW-0002">3D-structure</keyword>
<keyword id="KW-0025">Alternative splicing</keyword>
<keyword id="KW-0040">ANK repeat</keyword>
<keyword id="KW-0053">Apoptosis</keyword>
<keyword id="KW-0067">ATP-binding</keyword>
<keyword id="KW-0112">Calmodulin-binding</keyword>
<keyword id="KW-0963">Cytoplasm</keyword>
<keyword id="KW-0206">Cytoskeleton</keyword>
<keyword id="KW-0342">GTP-binding</keyword>
<keyword id="KW-0418">Kinase</keyword>
<keyword id="KW-0547">Nucleotide-binding</keyword>
<keyword id="KW-0597">Phosphoprotein</keyword>
<keyword id="KW-1267">Proteomics identification</keyword>
<keyword id="KW-1185">Reference proteome</keyword>
<keyword id="KW-0677">Repeat</keyword>
<keyword id="KW-0723">Serine/threonine-protein kinase</keyword>
<keyword id="KW-0808">Transferase</keyword>
<keyword id="KW-0810">Translation regulation</keyword>
<keyword id="KW-0832">Ubl conjugation</keyword>
<gene>
    <name type="primary">DAPK1</name>
    <name type="synonym">DAPK</name>
</gene>
<proteinExistence type="evidence at protein level"/>
<name>DAPK1_HUMAN</name>
<accession>P53355</accession>
<accession>B7ZLD2</accession>
<accession>B7ZLE7</accession>
<accession>Q14CQ7</accession>
<accession>Q1W5W0</accession>
<accession>Q68CP8</accession>
<accession>Q6ZRZ3</accession>
<accession>Q9BTL8</accession>
<comment type="function">
    <text>Calcium/calmodulin-dependent serine/threonine kinase involved in multiple cellular signaling pathways that trigger cell survival, apoptosis, and autophagy. Regulates both type I apoptotic and type II autophagic cell deaths signal, depending on the cellular setting. The former is caspase-dependent, while the latter is caspase-independent and is characterized by the accumulation of autophagic vesicles. Phosphorylates PIN1 resulting in inhibition of its catalytic activity, nuclear localization, and cellular function. Phosphorylates TPM1, enhancing stress fiber formation in endothelial cells. Phosphorylates STX1A and significantly decreases its binding to STXBP1. Phosphorylates PRKD1 and regulates JNK signaling by binding and activating PRKD1 under oxidative stress. Phosphorylates BECN1, reducing its interaction with BCL2 and BCL2L1 and promoting the induction of autophagy. Phosphorylates TSC2, disrupting the TSC1-TSC2 complex and stimulating mTORC1 activity in a growth factor-dependent pathway. Phosphorylates RPS6, MYL9 and DAPK3. Acts as a signaling amplifier of NMDA receptors at extrasynaptic sites for mediating brain damage in stroke. Cerebral ischemia recruits DAPK1 into the NMDA receptor complex and it phosphorylates GRINB at Ser-1303 inducing injurious Ca(2+) influx through NMDA receptor channels, resulting in an irreversible neuronal death. Required together with DAPK3 for phosphorylation of RPL13A upon interferon-gamma activation which is causing RPL13A involvement in transcript-selective translation inhibition.</text>
</comment>
<comment type="function">
    <text>Isoform 2 cannot induce apoptosis but can induce membrane blebbing.</text>
</comment>
<comment type="catalytic activity">
    <reaction>
        <text>L-seryl-[protein] + ATP = O-phospho-L-seryl-[protein] + ADP + H(+)</text>
        <dbReference type="Rhea" id="RHEA:17989"/>
        <dbReference type="Rhea" id="RHEA-COMP:9863"/>
        <dbReference type="Rhea" id="RHEA-COMP:11604"/>
        <dbReference type="ChEBI" id="CHEBI:15378"/>
        <dbReference type="ChEBI" id="CHEBI:29999"/>
        <dbReference type="ChEBI" id="CHEBI:30616"/>
        <dbReference type="ChEBI" id="CHEBI:83421"/>
        <dbReference type="ChEBI" id="CHEBI:456216"/>
        <dbReference type="EC" id="2.7.11.1"/>
    </reaction>
</comment>
<comment type="catalytic activity">
    <reaction>
        <text>L-threonyl-[protein] + ATP = O-phospho-L-threonyl-[protein] + ADP + H(+)</text>
        <dbReference type="Rhea" id="RHEA:46608"/>
        <dbReference type="Rhea" id="RHEA-COMP:11060"/>
        <dbReference type="Rhea" id="RHEA-COMP:11605"/>
        <dbReference type="ChEBI" id="CHEBI:15378"/>
        <dbReference type="ChEBI" id="CHEBI:30013"/>
        <dbReference type="ChEBI" id="CHEBI:30616"/>
        <dbReference type="ChEBI" id="CHEBI:61977"/>
        <dbReference type="ChEBI" id="CHEBI:456216"/>
        <dbReference type="EC" id="2.7.11.1"/>
    </reaction>
</comment>
<comment type="cofactor">
    <cofactor>
        <name>Mg(2+)</name>
        <dbReference type="ChEBI" id="CHEBI:18420"/>
    </cofactor>
</comment>
<comment type="activity regulation">
    <text evidence="7 12 15">Activated by Ca(2+)/calmodulin. Regulated by a locking mechanism, involving autophosphorylation at Ser-308 and calmodulin binding. In the inactive state, Ser-308 is phosphorylated. Activation involves its dephosphorylation and a release-of-autoinhibition mechanism where binding of calmodulin induces a conformational change that relieves the steric block of the active site by the autoinhibitory domain. Activity is modulated by UNC5B and NTN1. UNC5B activates it by inhibiting the phosphorylation at Ser-308, whereas NTN1 inhibits UNC5B-mediated activation of DAPK1. Endoplasmic-stress activates by causing Ser-308 dephosphorylation.</text>
</comment>
<comment type="subunit">
    <text evidence="2 8 10 11 12 13 17 19 21 22 23 24 25">Interacts with KLHL20 (PubMed:20389280). Interacts (via death domain) with MAPK1 and MAPK3 (PubMed:15616583). Interacts with MAP1B (via N-terminus) (PubMed:18195017). Interacts with PRKD1 in an oxidative stress-regulated manner (PubMed:17703233). Interacts with PIN1, PDCD6, BECN1, TSC2 and STX1A (PubMed:12730201, PubMed:16132846, PubMed:18974095, PubMed:19180116, PubMed:21497122). Interacts (via kinase domain) with DAPK3 (via kinase domain) (PubMed:15367680). Interacts with GRINB (By similarity). Interacts (via death domain) with UNC5B (via death domain) (PubMed:15729359). Interacts with UNC5C (via death domain) (PubMed:27068745).</text>
</comment>
<comment type="interaction">
    <interactant intactId="EBI-358616">
        <id>P53355</id>
    </interactant>
    <interactant intactId="EBI-355275">
        <id>O95816</id>
        <label>BAG2</label>
    </interactant>
    <organismsDiffer>false</organismsDiffer>
    <experiments>3</experiments>
</comment>
<comment type="interaction">
    <interactant intactId="EBI-358616">
        <id>P53355</id>
    </interactant>
    <interactant intactId="EBI-949378">
        <id>Q14457</id>
        <label>BECN1</label>
    </interactant>
    <organismsDiffer>false</organismsDiffer>
    <experiments>4</experiments>
</comment>
<comment type="interaction">
    <interactant intactId="EBI-358616">
        <id>P53355</id>
    </interactant>
    <interactant intactId="EBI-397435">
        <id>P62158</id>
        <label>CALM3</label>
    </interactant>
    <organismsDiffer>false</organismsDiffer>
    <experiments>6</experiments>
</comment>
<comment type="interaction">
    <interactant intactId="EBI-358616">
        <id>P53355</id>
    </interactant>
    <interactant intactId="EBI-358616">
        <id>P53355</id>
        <label>DAPK1</label>
    </interactant>
    <organismsDiffer>false</organismsDiffer>
    <experiments>6</experiments>
</comment>
<comment type="interaction">
    <interactant intactId="EBI-358616">
        <id>P53355</id>
    </interactant>
    <interactant intactId="EBI-714379">
        <id>Q9Y2M5</id>
        <label>KLHL20</label>
    </interactant>
    <organismsDiffer>false</organismsDiffer>
    <experiments>15</experiments>
</comment>
<comment type="interaction">
    <interactant intactId="EBI-358616">
        <id>P53355</id>
    </interactant>
    <interactant intactId="EBI-351479">
        <id>Q9UHB6</id>
        <label>LIMA1</label>
    </interactant>
    <organismsDiffer>false</organismsDiffer>
    <experiments>2</experiments>
</comment>
<comment type="interaction">
    <interactant intactId="EBI-358616">
        <id>P53355</id>
    </interactant>
    <interactant intactId="EBI-1050422">
        <id>Q38SD2</id>
        <label>LRRK1</label>
    </interactant>
    <organismsDiffer>false</organismsDiffer>
    <experiments>2</experiments>
</comment>
<comment type="interaction">
    <interactant intactId="EBI-358616">
        <id>P53355</id>
    </interactant>
    <interactant intactId="EBI-5323863">
        <id>Q5S007</id>
        <label>LRRK2</label>
    </interactant>
    <organismsDiffer>false</organismsDiffer>
    <experiments>2</experiments>
</comment>
<comment type="interaction">
    <interactant intactId="EBI-358616">
        <id>P53355</id>
    </interactant>
    <interactant intactId="EBI-73995">
        <id>P27361</id>
        <label>MAPK3</label>
    </interactant>
    <organismsDiffer>false</organismsDiffer>
    <experiments>5</experiments>
</comment>
<comment type="interaction">
    <interactant intactId="EBI-358616">
        <id>P53355</id>
    </interactant>
    <interactant intactId="EBI-352915">
        <id>O75340</id>
        <label>PDCD6</label>
    </interactant>
    <organismsDiffer>false</organismsDiffer>
    <experiments>3</experiments>
</comment>
<comment type="interaction">
    <interactant intactId="EBI-358616">
        <id>P53355</id>
    </interactant>
    <interactant intactId="EBI-353408">
        <id>P14618</id>
        <label>PKM</label>
    </interactant>
    <organismsDiffer>false</organismsDiffer>
    <experiments>3</experiments>
</comment>
<comment type="interaction">
    <interactant intactId="EBI-358616">
        <id>P53355</id>
    </interactant>
    <interactant intactId="EBI-4304679">
        <id>P14618-1</id>
        <label>PKM</label>
    </interactant>
    <organismsDiffer>false</organismsDiffer>
    <experiments>2</experiments>
</comment>
<comment type="interaction">
    <interactant intactId="EBI-358616">
        <id>P53355</id>
    </interactant>
    <interactant intactId="EBI-1048931">
        <id>P63151</id>
        <label>PPP2R2A</label>
    </interactant>
    <organismsDiffer>false</organismsDiffer>
    <experiments>3</experiments>
</comment>
<comment type="interaction">
    <interactant intactId="EBI-358616">
        <id>P53355</id>
    </interactant>
    <interactant intactId="EBI-357085">
        <id>Q9UNE7</id>
        <label>STUB1</label>
    </interactant>
    <organismsDiffer>false</organismsDiffer>
    <experiments>2</experiments>
</comment>
<comment type="subcellular location">
    <molecule>Isoform 1</molecule>
    <subcellularLocation>
        <location>Cytoplasm</location>
    </subcellularLocation>
    <subcellularLocation>
        <location>Cytoplasm</location>
        <location>Cytoskeleton</location>
    </subcellularLocation>
    <text>Colocalizes with MAP1B in the microtubules and cortical actin fibers.</text>
</comment>
<comment type="subcellular location">
    <molecule>Isoform 2</molecule>
    <subcellularLocation>
        <location>Cytoplasm</location>
    </subcellularLocation>
    <subcellularLocation>
        <location>Cytoplasm</location>
        <location>Cytoskeleton</location>
    </subcellularLocation>
</comment>
<comment type="alternative products">
    <event type="alternative splicing"/>
    <isoform>
        <id>P53355-1</id>
        <name>1</name>
        <name>Alpha</name>
        <sequence type="displayed"/>
    </isoform>
    <isoform>
        <id>P53355-2</id>
        <name>2</name>
        <name>s-DAPK-1</name>
        <sequence type="described" ref="VSP_042053 VSP_042054 VSP_042055"/>
    </isoform>
    <isoform>
        <id>P53355-3</id>
        <name>3</name>
        <name>Beta</name>
        <sequence type="described" ref="VSP_042056"/>
    </isoform>
    <isoform>
        <id>P53355-4</id>
        <name>4</name>
        <sequence type="described" ref="VSP_054478"/>
    </isoform>
</comment>
<comment type="tissue specificity">
    <text evidence="20">Isoform 2 is expressed in normal intestinal tissue as well as in colorectal carcinomas.</text>
</comment>
<comment type="induction">
    <text evidence="26">Up-regulated following treatment with IFNG/IFN-gamma.</text>
</comment>
<comment type="domain">
    <text>The autoinhibitory domain sterically blocks the substrate peptide-binding site by making both hydrophobic and electrostatic contacts with the kinase core.</text>
</comment>
<comment type="PTM">
    <text evidence="23">Ubiquitinated by the BCR(KLHL20) E3 ubiquitin ligase complex, leading to its degradation by the proteasome.</text>
</comment>
<comment type="PTM">
    <text evidence="20">Removal of the C-terminal tail of isoform 2 (corresponding to amino acids 296-337 of isoform 2) by proteolytic cleavage stimulates maximally its membrane-blebbing function.</text>
</comment>
<comment type="PTM">
    <text evidence="7 11 12 14 15">In response to mitogenic stimulation (PMA or EGF), phosphorylated at Ser-289; phosphorylation suppresses DAPK1 pro-apoptotic function. Autophosphorylation at Ser-308 inhibits its catalytic activity. Phosphorylation at Ser-734 by MAPK1 increases its catalytic activity and promotes cytoplasmic retention of MAPK1. Endoplasmic-stress can cause dephosphorylation at Ser-308.</text>
</comment>
<comment type="similarity">
    <text evidence="30">Belongs to the protein kinase superfamily. CAMK Ser/Thr protein kinase family. DAP kinase subfamily.</text>
</comment>
<comment type="sequence caution" evidence="30">
    <conflict type="miscellaneous discrepancy">
        <sequence resource="EMBL-CDS" id="AAP35581"/>
    </conflict>
    <text>Contaminating sequence. Sequence of unknown origin in the C-terminal part.</text>
</comment>
<comment type="sequence caution" evidence="30">
    <conflict type="frameshift">
        <sequence resource="EMBL-CDS" id="CAA53712"/>
    </conflict>
</comment>
<comment type="online information" name="Atlas of Genetics and Cytogenetics in Oncology and Haematology">
    <link uri="https://atlasgeneticsoncology.org/gene/417/DAPK1"/>
</comment>
<evidence type="ECO:0000250" key="1"/>
<evidence type="ECO:0000250" key="2">
    <source>
        <dbReference type="UniProtKB" id="Q80YE7"/>
    </source>
</evidence>
<evidence type="ECO:0000255" key="3">
    <source>
        <dbReference type="PROSITE-ProRule" id="PRU00064"/>
    </source>
</evidence>
<evidence type="ECO:0000255" key="4">
    <source>
        <dbReference type="PROSITE-ProRule" id="PRU00159"/>
    </source>
</evidence>
<evidence type="ECO:0000255" key="5">
    <source>
        <dbReference type="PROSITE-ProRule" id="PRU00758"/>
    </source>
</evidence>
<evidence type="ECO:0000255" key="6">
    <source>
        <dbReference type="PROSITE-ProRule" id="PRU10027"/>
    </source>
</evidence>
<evidence type="ECO:0000269" key="7">
    <source>
    </source>
</evidence>
<evidence type="ECO:0000269" key="8">
    <source>
    </source>
</evidence>
<evidence type="ECO:0000269" key="9">
    <source>
    </source>
</evidence>
<evidence type="ECO:0000269" key="10">
    <source>
    </source>
</evidence>
<evidence type="ECO:0000269" key="11">
    <source>
    </source>
</evidence>
<evidence type="ECO:0000269" key="12">
    <source>
    </source>
</evidence>
<evidence type="ECO:0000269" key="13">
    <source>
    </source>
</evidence>
<evidence type="ECO:0000269" key="14">
    <source>
    </source>
</evidence>
<evidence type="ECO:0000269" key="15">
    <source>
    </source>
</evidence>
<evidence type="ECO:0000269" key="16">
    <source>
    </source>
</evidence>
<evidence type="ECO:0000269" key="17">
    <source>
    </source>
</evidence>
<evidence type="ECO:0000269" key="18">
    <source>
    </source>
</evidence>
<evidence type="ECO:0000269" key="19">
    <source>
    </source>
</evidence>
<evidence type="ECO:0000269" key="20">
    <source>
    </source>
</evidence>
<evidence type="ECO:0000269" key="21">
    <source>
    </source>
</evidence>
<evidence type="ECO:0000269" key="22">
    <source>
    </source>
</evidence>
<evidence type="ECO:0000269" key="23">
    <source>
    </source>
</evidence>
<evidence type="ECO:0000269" key="24">
    <source>
    </source>
</evidence>
<evidence type="ECO:0000269" key="25">
    <source>
    </source>
</evidence>
<evidence type="ECO:0000269" key="26">
    <source>
    </source>
</evidence>
<evidence type="ECO:0000269" key="27">
    <source ref="5"/>
</evidence>
<evidence type="ECO:0000303" key="28">
    <source>
    </source>
</evidence>
<evidence type="ECO:0000303" key="29">
    <source>
    </source>
</evidence>
<evidence type="ECO:0000305" key="30"/>
<evidence type="ECO:0007744" key="31">
    <source>
    </source>
</evidence>
<evidence type="ECO:0007744" key="32">
    <source>
    </source>
</evidence>
<evidence type="ECO:0007744" key="33">
    <source>
    </source>
</evidence>
<evidence type="ECO:0007829" key="34">
    <source>
        <dbReference type="PDB" id="1JKT"/>
    </source>
</evidence>
<evidence type="ECO:0007829" key="35">
    <source>
        <dbReference type="PDB" id="1P4F"/>
    </source>
</evidence>
<evidence type="ECO:0007829" key="36">
    <source>
        <dbReference type="PDB" id="1YR5"/>
    </source>
</evidence>
<evidence type="ECO:0007829" key="37">
    <source>
        <dbReference type="PDB" id="2W4J"/>
    </source>
</evidence>
<evidence type="ECO:0007829" key="38">
    <source>
        <dbReference type="PDB" id="3ZXT"/>
    </source>
</evidence>
<evidence type="ECO:0007829" key="39">
    <source>
        <dbReference type="PDB" id="4B4L"/>
    </source>
</evidence>
<evidence type="ECO:0007829" key="40">
    <source>
        <dbReference type="PDB" id="4PF4"/>
    </source>
</evidence>
<evidence type="ECO:0007829" key="41">
    <source>
        <dbReference type="PDB" id="4UV0"/>
    </source>
</evidence>
<evidence type="ECO:0007829" key="42">
    <source>
        <dbReference type="PDB" id="6GY5"/>
    </source>
</evidence>
<feature type="chain" id="PRO_0000085910" description="Death-associated protein kinase 1">
    <location>
        <begin position="1"/>
        <end position="1430"/>
    </location>
</feature>
<feature type="domain" description="Protein kinase" evidence="4">
    <location>
        <begin position="13"/>
        <end position="275"/>
    </location>
</feature>
<feature type="repeat" description="ANK 1">
    <location>
        <begin position="378"/>
        <end position="407"/>
    </location>
</feature>
<feature type="repeat" description="ANK 2">
    <location>
        <begin position="411"/>
        <end position="440"/>
    </location>
</feature>
<feature type="repeat" description="ANK 3">
    <location>
        <begin position="444"/>
        <end position="473"/>
    </location>
</feature>
<feature type="repeat" description="ANK 4">
    <location>
        <begin position="477"/>
        <end position="506"/>
    </location>
</feature>
<feature type="repeat" description="ANK 5">
    <location>
        <begin position="510"/>
        <end position="539"/>
    </location>
</feature>
<feature type="repeat" description="ANK 6">
    <location>
        <begin position="543"/>
        <end position="572"/>
    </location>
</feature>
<feature type="repeat" description="ANK 7">
    <location>
        <begin position="576"/>
        <end position="605"/>
    </location>
</feature>
<feature type="repeat" description="ANK 8">
    <location>
        <begin position="609"/>
        <end position="638"/>
    </location>
</feature>
<feature type="domain" description="Roc" evidence="5">
    <location>
        <begin position="681"/>
        <end position="955"/>
    </location>
</feature>
<feature type="repeat" description="ANK 9">
    <location>
        <begin position="875"/>
        <end position="904"/>
    </location>
</feature>
<feature type="repeat" description="ANK 10">
    <location>
        <begin position="1162"/>
        <end position="1196"/>
    </location>
</feature>
<feature type="domain" description="Death" evidence="3">
    <location>
        <begin position="1312"/>
        <end position="1396"/>
    </location>
</feature>
<feature type="region of interest" description="Calmodulin-binding">
    <location>
        <begin position="267"/>
        <end position="334"/>
    </location>
</feature>
<feature type="region of interest" description="Autoinhibitory domain" evidence="1">
    <location>
        <begin position="292"/>
        <end position="301"/>
    </location>
</feature>
<feature type="active site" description="Proton acceptor" evidence="4 6">
    <location>
        <position position="139"/>
    </location>
</feature>
<feature type="binding site">
    <location>
        <begin position="19"/>
        <end position="27"/>
    </location>
    <ligand>
        <name>ATP</name>
        <dbReference type="ChEBI" id="CHEBI:30616"/>
    </ligand>
</feature>
<feature type="binding site">
    <location>
        <position position="42"/>
    </location>
    <ligand>
        <name>ATP</name>
        <dbReference type="ChEBI" id="CHEBI:30616"/>
    </ligand>
</feature>
<feature type="binding site">
    <location>
        <begin position="94"/>
        <end position="96"/>
    </location>
    <ligand>
        <name>ATP</name>
        <dbReference type="ChEBI" id="CHEBI:30616"/>
    </ligand>
</feature>
<feature type="binding site">
    <location>
        <position position="100"/>
    </location>
    <ligand>
        <name>ATP</name>
        <dbReference type="ChEBI" id="CHEBI:30616"/>
    </ligand>
</feature>
<feature type="binding site">
    <location>
        <position position="161"/>
    </location>
    <ligand>
        <name>ATP</name>
        <dbReference type="ChEBI" id="CHEBI:30616"/>
    </ligand>
</feature>
<feature type="modified residue" description="Phosphoserine; by RPS6KA1 and RPS6KA3" evidence="14">
    <location>
        <position position="289"/>
    </location>
</feature>
<feature type="modified residue" description="Phosphoserine; by autocatalysis" evidence="7 12 15">
    <location>
        <position position="308"/>
    </location>
</feature>
<feature type="modified residue" description="Phosphoserine" evidence="32">
    <location>
        <position position="319"/>
    </location>
</feature>
<feature type="modified residue" description="Phosphoserine" evidence="31 33">
    <location>
        <position position="333"/>
    </location>
</feature>
<feature type="modified residue" description="Phosphoserine; by MAPK1" evidence="11">
    <location>
        <position position="734"/>
    </location>
</feature>
<feature type="modified residue" description="Phosphoserine" evidence="2">
    <location>
        <position position="1115"/>
    </location>
</feature>
<feature type="splice variant" id="VSP_042053" description="In isoform 2." evidence="28">
    <location>
        <begin position="1"/>
        <end position="446"/>
    </location>
</feature>
<feature type="splice variant" id="VSP_042054" description="In isoform 2." evidence="28">
    <original>VSVSINNLYPGCENVSVRSRSMMFEPGLTKGMLEVFVAPTHH</original>
    <variation>GRNLHAGPVSPAGVGFRTLSFQGLGGKGVVFGSLGLYWTLWP</variation>
    <location>
        <begin position="742"/>
        <end position="783"/>
    </location>
</feature>
<feature type="splice variant" id="VSP_042055" description="In isoform 2." evidence="28">
    <location>
        <begin position="784"/>
        <end position="1430"/>
    </location>
</feature>
<feature type="splice variant" id="VSP_054478" description="In isoform 4." evidence="29">
    <location>
        <begin position="805"/>
        <end position="870"/>
    </location>
</feature>
<feature type="splice variant" id="VSP_042056" description="In isoform 3." evidence="30">
    <original>R</original>
    <variation>RRNSHVWNPTV</variation>
    <location>
        <position position="1430"/>
    </location>
</feature>
<feature type="sequence variant" id="VAR_033235" description="In dbSNP:rs12343465." evidence="16">
    <original>V</original>
    <variation>I</variation>
    <location>
        <position position="416"/>
    </location>
</feature>
<feature type="sequence variant" id="VAR_040420" evidence="16">
    <original>A</original>
    <variation>S</variation>
    <location>
        <position position="461"/>
    </location>
</feature>
<feature type="sequence variant" id="VAR_040421" evidence="16">
    <original>S</original>
    <variation>A</variation>
    <location>
        <position position="519"/>
    </location>
</feature>
<feature type="sequence variant" id="VAR_040422" description="In dbSNP:rs56327474." evidence="16">
    <original>C</original>
    <variation>Y</variation>
    <location>
        <position position="540"/>
    </location>
</feature>
<feature type="sequence variant" id="VAR_060693" description="In dbSNP:rs36214022." evidence="27">
    <original>P</original>
    <variation>L</variation>
    <location>
        <position position="591"/>
    </location>
</feature>
<feature type="sequence variant" id="VAR_060694" description="In dbSNP:rs36215047." evidence="27">
    <original>I</original>
    <variation>M</variation>
    <location>
        <position position="622"/>
    </location>
</feature>
<feature type="sequence variant" id="VAR_040423" evidence="16">
    <original>M</original>
    <variation>T</variation>
    <location>
        <position position="941"/>
    </location>
</feature>
<feature type="sequence variant" id="VAR_040424" evidence="16">
    <original>R</original>
    <variation>W</variation>
    <location>
        <position position="977"/>
    </location>
</feature>
<feature type="sequence variant" id="VAR_040425" evidence="16">
    <original>K</original>
    <variation>N</variation>
    <location>
        <position position="978"/>
    </location>
</feature>
<feature type="sequence variant" id="VAR_040426" evidence="16">
    <original>Y</original>
    <variation>C</variation>
    <location>
        <position position="993"/>
    </location>
</feature>
<feature type="sequence variant" id="VAR_040427" evidence="16">
    <original>D</original>
    <variation>E</variation>
    <location>
        <position position="994"/>
    </location>
</feature>
<feature type="sequence variant" id="VAR_040428" evidence="16">
    <original>E</original>
    <variation>Q</variation>
    <location>
        <position position="1005"/>
    </location>
</feature>
<feature type="sequence variant" id="VAR_040429" evidence="16">
    <original>D</original>
    <variation>Y</variation>
    <location>
        <position position="1007"/>
    </location>
</feature>
<feature type="sequence variant" id="VAR_040430" evidence="16">
    <original>L</original>
    <variation>P</variation>
    <location>
        <position position="1008"/>
    </location>
</feature>
<feature type="sequence variant" id="VAR_040431" description="In dbSNP:rs371784492." evidence="16">
    <original>R</original>
    <variation>C</variation>
    <location>
        <position position="1010"/>
    </location>
</feature>
<feature type="sequence variant" id="VAR_040432" evidence="16">
    <original>T</original>
    <variation>A</variation>
    <location>
        <position position="1018"/>
    </location>
</feature>
<feature type="sequence variant" id="VAR_040433" description="In dbSNP:rs56169226." evidence="16">
    <original>M</original>
    <variation>I</variation>
    <location>
        <position position="1272"/>
    </location>
</feature>
<feature type="sequence variant" id="VAR_040434" description="In dbSNP:rs1056719." evidence="9 16 18 26 27">
    <original>S</original>
    <variation>N</variation>
    <location>
        <position position="1346"/>
    </location>
</feature>
<feature type="sequence variant" id="VAR_040435" description="In dbSNP:rs36220450." evidence="16 27">
    <original>G</original>
    <variation>V</variation>
    <location>
        <position position="1405"/>
    </location>
</feature>
<feature type="mutagenesis site" description="Loss of activity, apoptotic function and of autophosphorylation." evidence="7 26">
    <original>K</original>
    <variation>A</variation>
    <location>
        <position position="42"/>
    </location>
</feature>
<feature type="mutagenesis site" description="Loss of phosphorylation and significant increase in proapoptotic activity.">
    <original>S</original>
    <variation>A</variation>
    <location>
        <position position="289"/>
    </location>
</feature>
<feature type="mutagenesis site" description="Reduction in proapoptotic activity.">
    <original>S</original>
    <variation>E</variation>
    <location>
        <position position="289"/>
    </location>
</feature>
<feature type="mutagenesis site" description="Elevated Ca(2+)-calmodulin binding and Ca(2+)-calmodulin-independent kinase activity. Increases apoptotic activity." evidence="7">
    <original>S</original>
    <variation>A</variation>
    <location>
        <position position="308"/>
    </location>
</feature>
<feature type="mutagenesis site" description="Reduced Ca(2+)-calmodulin binding and Ca(2+)-calmodulin-independent kinase activity. Decreases apoptotic activity." evidence="7">
    <original>S</original>
    <variation>D</variation>
    <location>
        <position position="308"/>
    </location>
</feature>
<feature type="mutagenesis site" description="Minimal effect on activity." evidence="7">
    <original>S</original>
    <variation>A</variation>
    <location>
        <position position="313"/>
    </location>
</feature>
<feature type="sequence conflict" description="In Ref. 3; BAC87163." evidence="30" ref="3">
    <original>Y</original>
    <variation>H</variation>
    <location>
        <position position="490"/>
    </location>
</feature>
<feature type="sequence conflict" description="In Ref. 4; CAH18690." evidence="30" ref="4">
    <original>S</original>
    <variation>G</variation>
    <location>
        <position position="1217"/>
    </location>
</feature>
<feature type="helix" evidence="40">
    <location>
        <begin position="9"/>
        <end position="11"/>
    </location>
</feature>
<feature type="strand" evidence="40">
    <location>
        <begin position="13"/>
        <end position="21"/>
    </location>
</feature>
<feature type="strand" evidence="40">
    <location>
        <begin position="23"/>
        <end position="32"/>
    </location>
</feature>
<feature type="turn" evidence="40">
    <location>
        <begin position="33"/>
        <end position="35"/>
    </location>
</feature>
<feature type="strand" evidence="40">
    <location>
        <begin position="38"/>
        <end position="46"/>
    </location>
</feature>
<feature type="strand" evidence="37">
    <location>
        <begin position="48"/>
        <end position="51"/>
    </location>
</feature>
<feature type="strand" evidence="40">
    <location>
        <begin position="53"/>
        <end position="56"/>
    </location>
</feature>
<feature type="helix" evidence="40">
    <location>
        <begin position="58"/>
        <end position="70"/>
    </location>
</feature>
<feature type="strand" evidence="40">
    <location>
        <begin position="79"/>
        <end position="84"/>
    </location>
</feature>
<feature type="strand" evidence="40">
    <location>
        <begin position="86"/>
        <end position="94"/>
    </location>
</feature>
<feature type="helix" evidence="40">
    <location>
        <begin position="101"/>
        <end position="107"/>
    </location>
</feature>
<feature type="strand" evidence="38">
    <location>
        <begin position="108"/>
        <end position="110"/>
    </location>
</feature>
<feature type="helix" evidence="40">
    <location>
        <begin position="113"/>
        <end position="132"/>
    </location>
</feature>
<feature type="strand" evidence="34">
    <location>
        <begin position="134"/>
        <end position="136"/>
    </location>
</feature>
<feature type="helix" evidence="40">
    <location>
        <begin position="142"/>
        <end position="144"/>
    </location>
</feature>
<feature type="strand" evidence="40">
    <location>
        <begin position="145"/>
        <end position="148"/>
    </location>
</feature>
<feature type="strand" evidence="40">
    <location>
        <begin position="150"/>
        <end position="154"/>
    </location>
</feature>
<feature type="strand" evidence="40">
    <location>
        <begin position="157"/>
        <end position="159"/>
    </location>
</feature>
<feature type="helix" evidence="41">
    <location>
        <begin position="162"/>
        <end position="164"/>
    </location>
</feature>
<feature type="strand" evidence="37">
    <location>
        <begin position="169"/>
        <end position="171"/>
    </location>
</feature>
<feature type="helix" evidence="40">
    <location>
        <begin position="181"/>
        <end position="183"/>
    </location>
</feature>
<feature type="helix" evidence="40">
    <location>
        <begin position="186"/>
        <end position="189"/>
    </location>
</feature>
<feature type="helix" evidence="40">
    <location>
        <begin position="197"/>
        <end position="212"/>
    </location>
</feature>
<feature type="helix" evidence="40">
    <location>
        <begin position="222"/>
        <end position="230"/>
    </location>
</feature>
<feature type="helix" evidence="40">
    <location>
        <begin position="238"/>
        <end position="241"/>
    </location>
</feature>
<feature type="strand" evidence="35">
    <location>
        <begin position="242"/>
        <end position="244"/>
    </location>
</feature>
<feature type="helix" evidence="40">
    <location>
        <begin position="246"/>
        <end position="255"/>
    </location>
</feature>
<feature type="turn" evidence="40">
    <location>
        <begin position="260"/>
        <end position="262"/>
    </location>
</feature>
<feature type="helix" evidence="40">
    <location>
        <begin position="266"/>
        <end position="271"/>
    </location>
</feature>
<feature type="turn" evidence="40">
    <location>
        <begin position="273"/>
        <end position="275"/>
    </location>
</feature>
<feature type="helix" evidence="39">
    <location>
        <begin position="280"/>
        <end position="288"/>
    </location>
</feature>
<feature type="helix" evidence="39">
    <location>
        <begin position="293"/>
        <end position="302"/>
    </location>
</feature>
<feature type="helix" evidence="36">
    <location>
        <begin position="304"/>
        <end position="318"/>
    </location>
</feature>
<feature type="turn" evidence="42">
    <location>
        <begin position="1338"/>
        <end position="1340"/>
    </location>
</feature>
<protein>
    <recommendedName>
        <fullName>Death-associated protein kinase 1</fullName>
        <shortName>DAP kinase 1</shortName>
        <ecNumber>2.7.11.1</ecNumber>
    </recommendedName>
</protein>